<dbReference type="EMBL" id="X52947">
    <property type="protein sequence ID" value="CAA37122.1"/>
    <property type="molecule type" value="mRNA"/>
</dbReference>
<dbReference type="EMBL" id="M65188">
    <property type="protein sequence ID" value="AAA52131.1"/>
    <property type="molecule type" value="mRNA"/>
</dbReference>
<dbReference type="EMBL" id="AF151980">
    <property type="protein sequence ID" value="AAD37802.2"/>
    <property type="molecule type" value="Genomic_DNA"/>
</dbReference>
<dbReference type="EMBL" id="CR541660">
    <property type="protein sequence ID" value="CAG46461.1"/>
    <property type="molecule type" value="mRNA"/>
</dbReference>
<dbReference type="EMBL" id="AK312324">
    <property type="protein sequence ID" value="BAG35246.1"/>
    <property type="molecule type" value="mRNA"/>
</dbReference>
<dbReference type="EMBL" id="AL139098">
    <property type="status" value="NOT_ANNOTATED_CDS"/>
    <property type="molecule type" value="Genomic_DNA"/>
</dbReference>
<dbReference type="EMBL" id="CH471051">
    <property type="protein sequence ID" value="EAW48178.1"/>
    <property type="molecule type" value="Genomic_DNA"/>
</dbReference>
<dbReference type="EMBL" id="BC026329">
    <property type="protein sequence ID" value="AAH26329.1"/>
    <property type="molecule type" value="mRNA"/>
</dbReference>
<dbReference type="CCDS" id="CCDS5123.1"/>
<dbReference type="PIR" id="A35853">
    <property type="entry name" value="A35853"/>
</dbReference>
<dbReference type="RefSeq" id="NP_000156.1">
    <property type="nucleotide sequence ID" value="NM_000165.5"/>
</dbReference>
<dbReference type="PDB" id="2LL2">
    <property type="method" value="NMR"/>
    <property type="chains" value="A=234-259"/>
</dbReference>
<dbReference type="PDB" id="7F92">
    <property type="method" value="EM"/>
    <property type="resolution" value="3.10 A"/>
    <property type="chains" value="A/B/C/D/E/F/G/H/I/J/K/L=1-382"/>
</dbReference>
<dbReference type="PDB" id="7F93">
    <property type="method" value="EM"/>
    <property type="resolution" value="3.60 A"/>
    <property type="chains" value="A/B/C/D/E/F/G/H/I/J/K/L=1-382"/>
</dbReference>
<dbReference type="PDB" id="7F94">
    <property type="method" value="EM"/>
    <property type="resolution" value="3.60 A"/>
    <property type="chains" value="A/B/C/D/E/F/G/H/I/J/K/L=1-257"/>
</dbReference>
<dbReference type="PDB" id="7XQ9">
    <property type="method" value="EM"/>
    <property type="resolution" value="3.30 A"/>
    <property type="chains" value="A/B/C/D/E/F/G/H/I/J/K/L=1-382"/>
</dbReference>
<dbReference type="PDB" id="7XQB">
    <property type="method" value="EM"/>
    <property type="resolution" value="3.00 A"/>
    <property type="chains" value="A/B/C/D/E/F/G/H/I/J/K/L=1-382"/>
</dbReference>
<dbReference type="PDB" id="7XQD">
    <property type="method" value="EM"/>
    <property type="resolution" value="2.70 A"/>
    <property type="chains" value="A/B/C/D/E/F/G/H/I/J/K/L=1-257"/>
</dbReference>
<dbReference type="PDB" id="7XQF">
    <property type="method" value="EM"/>
    <property type="resolution" value="2.30 A"/>
    <property type="chains" value="A/B/C/D/E/F/G/H/I/J/K/L=1-257"/>
</dbReference>
<dbReference type="PDB" id="7XQG">
    <property type="method" value="EM"/>
    <property type="resolution" value="3.80 A"/>
    <property type="chains" value="A/B/C/D/E/F=1-257"/>
</dbReference>
<dbReference type="PDB" id="7XQH">
    <property type="method" value="EM"/>
    <property type="resolution" value="3.80 A"/>
    <property type="chains" value="A/B/C/D/E/F=1-257"/>
</dbReference>
<dbReference type="PDB" id="7XQI">
    <property type="method" value="EM"/>
    <property type="resolution" value="3.70 A"/>
    <property type="chains" value="A/B/C/D/E/F=1-257"/>
</dbReference>
<dbReference type="PDB" id="7XQJ">
    <property type="method" value="EM"/>
    <property type="resolution" value="4.00 A"/>
    <property type="chains" value="A/B/C/D/E/F=1-257"/>
</dbReference>
<dbReference type="PDB" id="7Z1T">
    <property type="method" value="EM"/>
    <property type="resolution" value="2.26 A"/>
    <property type="chains" value="A/B/C/D/E/F/G/H/I/J/K/L=1-382"/>
</dbReference>
<dbReference type="PDB" id="7Z22">
    <property type="method" value="EM"/>
    <property type="resolution" value="2.95 A"/>
    <property type="chains" value="A/B/C/D/E/F/G/H/I/J/K/L=1-382"/>
</dbReference>
<dbReference type="PDB" id="7Z23">
    <property type="method" value="EM"/>
    <property type="resolution" value="3.98 A"/>
    <property type="chains" value="A/B/C/D/E/F=1-382"/>
</dbReference>
<dbReference type="PDB" id="8QKO">
    <property type="method" value="EM"/>
    <property type="resolution" value="3.73 A"/>
    <property type="chains" value="A/B/C/D/E/F/G/H/I/J/K/L=1-382"/>
</dbReference>
<dbReference type="PDBsum" id="2LL2"/>
<dbReference type="PDBsum" id="7F92"/>
<dbReference type="PDBsum" id="7F93"/>
<dbReference type="PDBsum" id="7F94"/>
<dbReference type="PDBsum" id="7XQ9"/>
<dbReference type="PDBsum" id="7XQB"/>
<dbReference type="PDBsum" id="7XQD"/>
<dbReference type="PDBsum" id="7XQF"/>
<dbReference type="PDBsum" id="7XQG"/>
<dbReference type="PDBsum" id="7XQH"/>
<dbReference type="PDBsum" id="7XQI"/>
<dbReference type="PDBsum" id="7XQJ"/>
<dbReference type="PDBsum" id="7Z1T"/>
<dbReference type="PDBsum" id="7Z22"/>
<dbReference type="PDBsum" id="7Z23"/>
<dbReference type="PDBsum" id="8QKO"/>
<dbReference type="BMRB" id="P17302"/>
<dbReference type="EMDB" id="EMD-14452"/>
<dbReference type="EMDB" id="EMD-14455"/>
<dbReference type="EMDB" id="EMD-14456"/>
<dbReference type="EMDB" id="EMD-18468"/>
<dbReference type="EMDB" id="EMD-31495"/>
<dbReference type="EMDB" id="EMD-31496"/>
<dbReference type="EMDB" id="EMD-31497"/>
<dbReference type="EMDB" id="EMD-33391"/>
<dbReference type="EMDB" id="EMD-33392"/>
<dbReference type="EMDB" id="EMD-33393"/>
<dbReference type="EMDB" id="EMD-33394"/>
<dbReference type="EMDB" id="EMD-33395"/>
<dbReference type="EMDB" id="EMD-33396"/>
<dbReference type="EMDB" id="EMD-33397"/>
<dbReference type="EMDB" id="EMD-33398"/>
<dbReference type="EMDB" id="EMD-33399"/>
<dbReference type="SMR" id="P17302"/>
<dbReference type="BioGRID" id="108964">
    <property type="interactions" value="579"/>
</dbReference>
<dbReference type="FunCoup" id="P17302">
    <property type="interactions" value="188"/>
</dbReference>
<dbReference type="IntAct" id="P17302">
    <property type="interactions" value="76"/>
</dbReference>
<dbReference type="MINT" id="P17302"/>
<dbReference type="STRING" id="9606.ENSP00000282561"/>
<dbReference type="BindingDB" id="P17302"/>
<dbReference type="ChEMBL" id="CHEMBL4680024"/>
<dbReference type="DrugBank" id="DB00640">
    <property type="generic name" value="Adenosine"/>
</dbReference>
<dbReference type="DrugBank" id="DB12452">
    <property type="generic name" value="Caprylic alcohol"/>
</dbReference>
<dbReference type="DrugBank" id="DB01136">
    <property type="generic name" value="Carvedilol"/>
</dbReference>
<dbReference type="DrugCentral" id="P17302"/>
<dbReference type="TCDB" id="1.A.24.1.16">
    <property type="family name" value="the gap junction-forming connexin (connexin) family"/>
</dbReference>
<dbReference type="GlyGen" id="P17302">
    <property type="glycosylation" value="1 site, 1 O-linked glycan (1 site)"/>
</dbReference>
<dbReference type="iPTMnet" id="P17302"/>
<dbReference type="PhosphoSitePlus" id="P17302"/>
<dbReference type="SwissPalm" id="P17302"/>
<dbReference type="BioMuta" id="GJA1"/>
<dbReference type="DMDM" id="117706"/>
<dbReference type="jPOST" id="P17302"/>
<dbReference type="MassIVE" id="P17302"/>
<dbReference type="PaxDb" id="9606-ENSP00000282561"/>
<dbReference type="PeptideAtlas" id="P17302"/>
<dbReference type="ProteomicsDB" id="53467"/>
<dbReference type="Pumba" id="P17302"/>
<dbReference type="TopDownProteomics" id="P17302"/>
<dbReference type="ABCD" id="P17302">
    <property type="antibodies" value="3 sequenced antibodies"/>
</dbReference>
<dbReference type="Antibodypedia" id="4382">
    <property type="antibodies" value="1225 antibodies from 47 providers"/>
</dbReference>
<dbReference type="DNASU" id="2697"/>
<dbReference type="Ensembl" id="ENST00000282561.4">
    <property type="protein sequence ID" value="ENSP00000282561.3"/>
    <property type="gene ID" value="ENSG00000152661.9"/>
</dbReference>
<dbReference type="Ensembl" id="ENST00000647564.1">
    <property type="protein sequence ID" value="ENSP00000497565.1"/>
    <property type="gene ID" value="ENSG00000152661.9"/>
</dbReference>
<dbReference type="Ensembl" id="ENST00000649003.1">
    <property type="protein sequence ID" value="ENSP00000497283.1"/>
    <property type="gene ID" value="ENSG00000152661.9"/>
</dbReference>
<dbReference type="Ensembl" id="ENST00000650427.1">
    <property type="protein sequence ID" value="ENSP00000497367.1"/>
    <property type="gene ID" value="ENSG00000152661.9"/>
</dbReference>
<dbReference type="GeneID" id="2697"/>
<dbReference type="KEGG" id="hsa:2697"/>
<dbReference type="MANE-Select" id="ENST00000282561.4">
    <property type="protein sequence ID" value="ENSP00000282561.3"/>
    <property type="RefSeq nucleotide sequence ID" value="NM_000165.5"/>
    <property type="RefSeq protein sequence ID" value="NP_000156.1"/>
</dbReference>
<dbReference type="UCSC" id="uc003pyr.4">
    <property type="organism name" value="human"/>
</dbReference>
<dbReference type="AGR" id="HGNC:4274"/>
<dbReference type="CTD" id="2697"/>
<dbReference type="DisGeNET" id="2697"/>
<dbReference type="GeneCards" id="GJA1"/>
<dbReference type="HGNC" id="HGNC:4274">
    <property type="gene designation" value="GJA1"/>
</dbReference>
<dbReference type="HPA" id="ENSG00000152661">
    <property type="expression patterns" value="Low tissue specificity"/>
</dbReference>
<dbReference type="MalaCards" id="GJA1"/>
<dbReference type="MIM" id="104100">
    <property type="type" value="phenotype"/>
</dbReference>
<dbReference type="MIM" id="121014">
    <property type="type" value="gene"/>
</dbReference>
<dbReference type="MIM" id="164200">
    <property type="type" value="phenotype"/>
</dbReference>
<dbReference type="MIM" id="186100">
    <property type="type" value="phenotype"/>
</dbReference>
<dbReference type="MIM" id="218400">
    <property type="type" value="phenotype"/>
</dbReference>
<dbReference type="MIM" id="234100">
    <property type="type" value="phenotype"/>
</dbReference>
<dbReference type="MIM" id="241550">
    <property type="type" value="phenotype"/>
</dbReference>
<dbReference type="MIM" id="257850">
    <property type="type" value="phenotype"/>
</dbReference>
<dbReference type="MIM" id="617525">
    <property type="type" value="phenotype"/>
</dbReference>
<dbReference type="neXtProt" id="NX_P17302"/>
<dbReference type="OpenTargets" id="ENSG00000152661"/>
<dbReference type="Orphanet" id="1010">
    <property type="disease" value="Autosomal dominant palmoplantar keratoderma and congenital alopecia"/>
</dbReference>
<dbReference type="Orphanet" id="1522">
    <property type="disease" value="Craniometaphyseal dysplasia"/>
</dbReference>
<dbReference type="Orphanet" id="317">
    <property type="disease" value="Erythrokeratodermia variabilis"/>
</dbReference>
<dbReference type="Orphanet" id="2248">
    <property type="disease" value="Hypoplastic left heart syndrome"/>
</dbReference>
<dbReference type="Orphanet" id="2710">
    <property type="disease" value="Oculodentodigital dysplasia"/>
</dbReference>
<dbReference type="Orphanet" id="90636">
    <property type="disease" value="Rare autosomal recessive non-syndromic sensorineural deafness type DFNB"/>
</dbReference>
<dbReference type="Orphanet" id="93404">
    <property type="disease" value="Syndactyly type 3"/>
</dbReference>
<dbReference type="PharmGKB" id="PA28685"/>
<dbReference type="VEuPathDB" id="HostDB:ENSG00000152661"/>
<dbReference type="eggNOG" id="ENOG502QRAE">
    <property type="taxonomic scope" value="Eukaryota"/>
</dbReference>
<dbReference type="GeneTree" id="ENSGT01090000260070"/>
<dbReference type="HOGENOM" id="CLU_037388_0_0_1"/>
<dbReference type="InParanoid" id="P17302"/>
<dbReference type="OMA" id="FWVLQFI"/>
<dbReference type="OrthoDB" id="8773830at2759"/>
<dbReference type="PAN-GO" id="P17302">
    <property type="GO annotations" value="3 GO annotations based on evolutionary models"/>
</dbReference>
<dbReference type="PhylomeDB" id="P17302"/>
<dbReference type="TreeFam" id="TF329606"/>
<dbReference type="PathwayCommons" id="P17302"/>
<dbReference type="Reactome" id="R-HSA-190704">
    <property type="pathway name" value="Oligomerization of connexins into connexons"/>
</dbReference>
<dbReference type="Reactome" id="R-HSA-190827">
    <property type="pathway name" value="Transport of connexins along the secretory pathway"/>
</dbReference>
<dbReference type="Reactome" id="R-HSA-190840">
    <property type="pathway name" value="Microtubule-dependent trafficking of connexons from Golgi to the plasma membrane"/>
</dbReference>
<dbReference type="Reactome" id="R-HSA-190861">
    <property type="pathway name" value="Gap junction assembly"/>
</dbReference>
<dbReference type="Reactome" id="R-HSA-190873">
    <property type="pathway name" value="Gap junction degradation"/>
</dbReference>
<dbReference type="Reactome" id="R-HSA-191650">
    <property type="pathway name" value="Regulation of gap junction activity"/>
</dbReference>
<dbReference type="Reactome" id="R-HSA-196025">
    <property type="pathway name" value="Formation of annular gap junctions"/>
</dbReference>
<dbReference type="Reactome" id="R-HSA-9013406">
    <property type="pathway name" value="RHOQ GTPase cycle"/>
</dbReference>
<dbReference type="Reactome" id="R-HSA-9013409">
    <property type="pathway name" value="RHOJ GTPase cycle"/>
</dbReference>
<dbReference type="Reactome" id="R-HSA-9705677">
    <property type="pathway name" value="SARS-CoV-2 targets PDZ proteins in cell-cell junction"/>
</dbReference>
<dbReference type="Reactome" id="R-HSA-9856532">
    <property type="pathway name" value="Mechanical load activates signaling by PIEZO1 and integrins in osteocytes"/>
</dbReference>
<dbReference type="SignaLink" id="P17302"/>
<dbReference type="SIGNOR" id="P17302"/>
<dbReference type="BioGRID-ORCS" id="2697">
    <property type="hits" value="29 hits in 1120 CRISPR screens"/>
</dbReference>
<dbReference type="ChiTaRS" id="GJA1">
    <property type="organism name" value="human"/>
</dbReference>
<dbReference type="GeneWiki" id="GJA1"/>
<dbReference type="GenomeRNAi" id="2697"/>
<dbReference type="Pharos" id="P17302">
    <property type="development level" value="Tbio"/>
</dbReference>
<dbReference type="PRO" id="PR:P17302"/>
<dbReference type="Proteomes" id="UP000005640">
    <property type="component" value="Chromosome 6"/>
</dbReference>
<dbReference type="RNAct" id="P17302">
    <property type="molecule type" value="protein"/>
</dbReference>
<dbReference type="Bgee" id="ENSG00000152661">
    <property type="expression patterns" value="Expressed in lateral globus pallidus and 204 other cell types or tissues"/>
</dbReference>
<dbReference type="ExpressionAtlas" id="P17302">
    <property type="expression patterns" value="baseline and differential"/>
</dbReference>
<dbReference type="GO" id="GO:0016324">
    <property type="term" value="C:apical plasma membrane"/>
    <property type="evidence" value="ECO:0000250"/>
    <property type="project" value="UniProtKB"/>
</dbReference>
<dbReference type="GO" id="GO:0030054">
    <property type="term" value="C:cell junction"/>
    <property type="evidence" value="ECO:0000314"/>
    <property type="project" value="UniProtKB"/>
</dbReference>
<dbReference type="GO" id="GO:0044291">
    <property type="term" value="C:cell-cell contact zone"/>
    <property type="evidence" value="ECO:0000314"/>
    <property type="project" value="ARUK-UCL"/>
</dbReference>
<dbReference type="GO" id="GO:0005922">
    <property type="term" value="C:connexin complex"/>
    <property type="evidence" value="ECO:0000250"/>
    <property type="project" value="UniProtKB"/>
</dbReference>
<dbReference type="GO" id="GO:0005737">
    <property type="term" value="C:cytoplasm"/>
    <property type="evidence" value="ECO:0000314"/>
    <property type="project" value="ARUK-UCL"/>
</dbReference>
<dbReference type="GO" id="GO:0005789">
    <property type="term" value="C:endoplasmic reticulum membrane"/>
    <property type="evidence" value="ECO:0000304"/>
    <property type="project" value="Reactome"/>
</dbReference>
<dbReference type="GO" id="GO:0005925">
    <property type="term" value="C:focal adhesion"/>
    <property type="evidence" value="ECO:0007005"/>
    <property type="project" value="UniProtKB"/>
</dbReference>
<dbReference type="GO" id="GO:0005921">
    <property type="term" value="C:gap junction"/>
    <property type="evidence" value="ECO:0000314"/>
    <property type="project" value="BHF-UCL"/>
</dbReference>
<dbReference type="GO" id="GO:0005794">
    <property type="term" value="C:Golgi apparatus"/>
    <property type="evidence" value="ECO:0000250"/>
    <property type="project" value="BHF-UCL"/>
</dbReference>
<dbReference type="GO" id="GO:0000139">
    <property type="term" value="C:Golgi membrane"/>
    <property type="evidence" value="ECO:0000304"/>
    <property type="project" value="Reactome"/>
</dbReference>
<dbReference type="GO" id="GO:0030660">
    <property type="term" value="C:Golgi-associated vesicle membrane"/>
    <property type="evidence" value="ECO:0000304"/>
    <property type="project" value="Reactome"/>
</dbReference>
<dbReference type="GO" id="GO:0014704">
    <property type="term" value="C:intercalated disc"/>
    <property type="evidence" value="ECO:0000314"/>
    <property type="project" value="BHF-UCL"/>
</dbReference>
<dbReference type="GO" id="GO:0043231">
    <property type="term" value="C:intracellular membrane-bounded organelle"/>
    <property type="evidence" value="ECO:0000314"/>
    <property type="project" value="HPA"/>
</dbReference>
<dbReference type="GO" id="GO:0045121">
    <property type="term" value="C:membrane raft"/>
    <property type="evidence" value="ECO:0000250"/>
    <property type="project" value="BHF-UCL"/>
</dbReference>
<dbReference type="GO" id="GO:0005739">
    <property type="term" value="C:mitochondrion"/>
    <property type="evidence" value="ECO:0000314"/>
    <property type="project" value="UniProtKB"/>
</dbReference>
<dbReference type="GO" id="GO:0005654">
    <property type="term" value="C:nucleoplasm"/>
    <property type="evidence" value="ECO:0000314"/>
    <property type="project" value="HPA"/>
</dbReference>
<dbReference type="GO" id="GO:0005634">
    <property type="term" value="C:nucleus"/>
    <property type="evidence" value="ECO:0000314"/>
    <property type="project" value="UniProtKB"/>
</dbReference>
<dbReference type="GO" id="GO:0005886">
    <property type="term" value="C:plasma membrane"/>
    <property type="evidence" value="ECO:0000314"/>
    <property type="project" value="ARUK-UCL"/>
</dbReference>
<dbReference type="GO" id="GO:0070160">
    <property type="term" value="C:tight junction"/>
    <property type="evidence" value="ECO:0000314"/>
    <property type="project" value="ARUK-UCL"/>
</dbReference>
<dbReference type="GO" id="GO:0043014">
    <property type="term" value="F:alpha-tubulin binding"/>
    <property type="evidence" value="ECO:0000314"/>
    <property type="project" value="UniProtKB"/>
</dbReference>
<dbReference type="GO" id="GO:0008013">
    <property type="term" value="F:beta-catenin binding"/>
    <property type="evidence" value="ECO:0000353"/>
    <property type="project" value="ARUK-UCL"/>
</dbReference>
<dbReference type="GO" id="GO:0015562">
    <property type="term" value="F:efflux transmembrane transporter activity"/>
    <property type="evidence" value="ECO:0000250"/>
    <property type="project" value="ARUK-UCL"/>
</dbReference>
<dbReference type="GO" id="GO:0005243">
    <property type="term" value="F:gap junction channel activity"/>
    <property type="evidence" value="ECO:0000314"/>
    <property type="project" value="BHF-UCL"/>
</dbReference>
<dbReference type="GO" id="GO:0086075">
    <property type="term" value="F:gap junction channel activity involved in cardiac conduction electrical coupling"/>
    <property type="evidence" value="ECO:0000303"/>
    <property type="project" value="BHF-UCL"/>
</dbReference>
<dbReference type="GO" id="GO:1903763">
    <property type="term" value="F:gap junction channel activity involved in cell communication by electrical coupling"/>
    <property type="evidence" value="ECO:0000314"/>
    <property type="project" value="BHF-UCL"/>
</dbReference>
<dbReference type="GO" id="GO:0055077">
    <property type="term" value="F:gap junction hemi-channel activity"/>
    <property type="evidence" value="ECO:0000315"/>
    <property type="project" value="UniProtKB"/>
</dbReference>
<dbReference type="GO" id="GO:0034634">
    <property type="term" value="F:glutathione transmembrane transporter activity"/>
    <property type="evidence" value="ECO:0000250"/>
    <property type="project" value="ARUK-UCL"/>
</dbReference>
<dbReference type="GO" id="GO:0015075">
    <property type="term" value="F:monoatomic ion transmembrane transporter activity"/>
    <property type="evidence" value="ECO:0000314"/>
    <property type="project" value="BHF-UCL"/>
</dbReference>
<dbReference type="GO" id="GO:0015631">
    <property type="term" value="F:tubulin binding"/>
    <property type="evidence" value="ECO:0000314"/>
    <property type="project" value="UniProtKB"/>
</dbReference>
<dbReference type="GO" id="GO:0086014">
    <property type="term" value="P:atrial cardiac muscle cell action potential"/>
    <property type="evidence" value="ECO:0000304"/>
    <property type="project" value="BHF-UCL"/>
</dbReference>
<dbReference type="GO" id="GO:0060348">
    <property type="term" value="P:bone development"/>
    <property type="evidence" value="ECO:0000250"/>
    <property type="project" value="UniProtKB"/>
</dbReference>
<dbReference type="GO" id="GO:0046849">
    <property type="term" value="P:bone remodeling"/>
    <property type="evidence" value="ECO:0000250"/>
    <property type="project" value="UniProtKB"/>
</dbReference>
<dbReference type="GO" id="GO:0003161">
    <property type="term" value="P:cardiac conduction system development"/>
    <property type="evidence" value="ECO:0000303"/>
    <property type="project" value="BHF-UCL"/>
</dbReference>
<dbReference type="GO" id="GO:0010644">
    <property type="term" value="P:cell communication by electrical coupling"/>
    <property type="evidence" value="ECO:0000314"/>
    <property type="project" value="BHF-UCL"/>
</dbReference>
<dbReference type="GO" id="GO:0086064">
    <property type="term" value="P:cell communication by electrical coupling involved in cardiac conduction"/>
    <property type="evidence" value="ECO:0000303"/>
    <property type="project" value="BHF-UCL"/>
</dbReference>
<dbReference type="GO" id="GO:0007267">
    <property type="term" value="P:cell-cell signaling"/>
    <property type="evidence" value="ECO:0000314"/>
    <property type="project" value="BHF-UCL"/>
</dbReference>
<dbReference type="GO" id="GO:1904646">
    <property type="term" value="P:cellular response to amyloid-beta"/>
    <property type="evidence" value="ECO:0000250"/>
    <property type="project" value="ARUK-UCL"/>
</dbReference>
<dbReference type="GO" id="GO:0000132">
    <property type="term" value="P:establishment of mitotic spindle orientation"/>
    <property type="evidence" value="ECO:0000315"/>
    <property type="project" value="ARUK-UCL"/>
</dbReference>
<dbReference type="GO" id="GO:0140115">
    <property type="term" value="P:export across plasma membrane"/>
    <property type="evidence" value="ECO:0000250"/>
    <property type="project" value="ARUK-UCL"/>
</dbReference>
<dbReference type="GO" id="GO:0016264">
    <property type="term" value="P:gap junction assembly"/>
    <property type="evidence" value="ECO:0000304"/>
    <property type="project" value="UniProtKB"/>
</dbReference>
<dbReference type="GO" id="GO:0014047">
    <property type="term" value="P:glutamate secretion"/>
    <property type="evidence" value="ECO:0000250"/>
    <property type="project" value="ARUK-UCL"/>
</dbReference>
<dbReference type="GO" id="GO:0007507">
    <property type="term" value="P:heart development"/>
    <property type="evidence" value="ECO:0000318"/>
    <property type="project" value="GO_Central"/>
</dbReference>
<dbReference type="GO" id="GO:0035633">
    <property type="term" value="P:maintenance of blood-brain barrier"/>
    <property type="evidence" value="ECO:0000303"/>
    <property type="project" value="ARUK-UCL"/>
</dbReference>
<dbReference type="GO" id="GO:0099111">
    <property type="term" value="P:microtubule-based transport"/>
    <property type="evidence" value="ECO:0000315"/>
    <property type="project" value="UniProtKB"/>
</dbReference>
<dbReference type="GO" id="GO:0034220">
    <property type="term" value="P:monoatomic ion transmembrane transport"/>
    <property type="evidence" value="ECO:0000314"/>
    <property type="project" value="BHF-UCL"/>
</dbReference>
<dbReference type="GO" id="GO:0030308">
    <property type="term" value="P:negative regulation of cell growth"/>
    <property type="evidence" value="ECO:0000250"/>
    <property type="project" value="UniProtKB"/>
</dbReference>
<dbReference type="GO" id="GO:0032277">
    <property type="term" value="P:negative regulation of gonadotropin secretion"/>
    <property type="evidence" value="ECO:0000315"/>
    <property type="project" value="ARUK-UCL"/>
</dbReference>
<dbReference type="GO" id="GO:1901164">
    <property type="term" value="P:negative regulation of trophoblast cell migration"/>
    <property type="evidence" value="ECO:0000315"/>
    <property type="project" value="ARUK-UCL"/>
</dbReference>
<dbReference type="GO" id="GO:0043123">
    <property type="term" value="P:positive regulation of canonical NF-kappaB signal transduction"/>
    <property type="evidence" value="ECO:0007001"/>
    <property type="project" value="UniProtKB"/>
</dbReference>
<dbReference type="GO" id="GO:0120162">
    <property type="term" value="P:positive regulation of cold-induced thermogenesis"/>
    <property type="evidence" value="ECO:0000250"/>
    <property type="project" value="YuBioLab"/>
</dbReference>
<dbReference type="GO" id="GO:0010628">
    <property type="term" value="P:positive regulation of gene expression"/>
    <property type="evidence" value="ECO:0000315"/>
    <property type="project" value="ARUK-UCL"/>
</dbReference>
<dbReference type="GO" id="GO:1905772">
    <property type="term" value="P:positive regulation of mesodermal cell differentiation"/>
    <property type="evidence" value="ECO:0000315"/>
    <property type="project" value="ARUK-UCL"/>
</dbReference>
<dbReference type="GO" id="GO:1905332">
    <property type="term" value="P:positive regulation of morphogenesis of an epithelium"/>
    <property type="evidence" value="ECO:0000315"/>
    <property type="project" value="ARUK-UCL"/>
</dbReference>
<dbReference type="GO" id="GO:2000648">
    <property type="term" value="P:positive regulation of stem cell proliferation"/>
    <property type="evidence" value="ECO:0000315"/>
    <property type="project" value="ARUK-UCL"/>
</dbReference>
<dbReference type="GO" id="GO:1904707">
    <property type="term" value="P:positive regulation of vascular associated smooth muscle cell proliferation"/>
    <property type="evidence" value="ECO:0000315"/>
    <property type="project" value="ARUK-UCL"/>
</dbReference>
<dbReference type="GO" id="GO:0008104">
    <property type="term" value="P:protein localization"/>
    <property type="evidence" value="ECO:0000315"/>
    <property type="project" value="ARUK-UCL"/>
</dbReference>
<dbReference type="GO" id="GO:0007165">
    <property type="term" value="P:signal transduction"/>
    <property type="evidence" value="ECO:0000314"/>
    <property type="project" value="BHF-UCL"/>
</dbReference>
<dbReference type="GO" id="GO:0007283">
    <property type="term" value="P:spermatogenesis"/>
    <property type="evidence" value="ECO:0000250"/>
    <property type="project" value="UniProtKB"/>
</dbReference>
<dbReference type="GO" id="GO:0042908">
    <property type="term" value="P:xenobiotic transport"/>
    <property type="evidence" value="ECO:0000250"/>
    <property type="project" value="ARUK-UCL"/>
</dbReference>
<dbReference type="FunFam" id="1.20.1440.80:FF:000001">
    <property type="entry name" value="Gap junction alpha-1"/>
    <property type="match status" value="1"/>
</dbReference>
<dbReference type="FunFam" id="1.20.5.1130:FF:000001">
    <property type="entry name" value="Gap junction alpha-1"/>
    <property type="match status" value="1"/>
</dbReference>
<dbReference type="Gene3D" id="1.20.5.1130">
    <property type="entry name" value="Connexin43"/>
    <property type="match status" value="1"/>
</dbReference>
<dbReference type="Gene3D" id="1.20.1440.80">
    <property type="entry name" value="Gap junction channel protein cysteine-rich domain"/>
    <property type="match status" value="1"/>
</dbReference>
<dbReference type="InterPro" id="IPR035091">
    <property type="entry name" value="Alpha_helix_dom_sf"/>
</dbReference>
<dbReference type="InterPro" id="IPR000500">
    <property type="entry name" value="Connexin"/>
</dbReference>
<dbReference type="InterPro" id="IPR002261">
    <property type="entry name" value="Connexin43"/>
</dbReference>
<dbReference type="InterPro" id="IPR013124">
    <property type="entry name" value="Connexin43_C"/>
</dbReference>
<dbReference type="InterPro" id="IPR034634">
    <property type="entry name" value="Connexin_C"/>
</dbReference>
<dbReference type="InterPro" id="IPR019570">
    <property type="entry name" value="Connexin_CCC"/>
</dbReference>
<dbReference type="InterPro" id="IPR017990">
    <property type="entry name" value="Connexin_CS"/>
</dbReference>
<dbReference type="InterPro" id="IPR013092">
    <property type="entry name" value="Connexin_N"/>
</dbReference>
<dbReference type="InterPro" id="IPR038359">
    <property type="entry name" value="Connexin_N_sf"/>
</dbReference>
<dbReference type="PANTHER" id="PTHR11984">
    <property type="entry name" value="CONNEXIN"/>
    <property type="match status" value="1"/>
</dbReference>
<dbReference type="PANTHER" id="PTHR11984:SF33">
    <property type="entry name" value="GAP JUNCTION ALPHA-1 PROTEIN"/>
    <property type="match status" value="1"/>
</dbReference>
<dbReference type="Pfam" id="PF00029">
    <property type="entry name" value="Connexin"/>
    <property type="match status" value="1"/>
</dbReference>
<dbReference type="Pfam" id="PF03508">
    <property type="entry name" value="Connexin43"/>
    <property type="match status" value="1"/>
</dbReference>
<dbReference type="PRINTS" id="PR00206">
    <property type="entry name" value="CONNEXIN"/>
</dbReference>
<dbReference type="PRINTS" id="PR01132">
    <property type="entry name" value="CONNEXINA1"/>
</dbReference>
<dbReference type="SMART" id="SM00037">
    <property type="entry name" value="CNX"/>
    <property type="match status" value="1"/>
</dbReference>
<dbReference type="SMART" id="SM01089">
    <property type="entry name" value="Connexin_CCC"/>
    <property type="match status" value="1"/>
</dbReference>
<dbReference type="SUPFAM" id="SSF118220">
    <property type="entry name" value="Connexin43"/>
    <property type="match status" value="1"/>
</dbReference>
<dbReference type="PROSITE" id="PS00407">
    <property type="entry name" value="CONNEXINS_1"/>
    <property type="match status" value="1"/>
</dbReference>
<dbReference type="PROSITE" id="PS00408">
    <property type="entry name" value="CONNEXINS_2"/>
    <property type="match status" value="1"/>
</dbReference>
<proteinExistence type="evidence at protein level"/>
<name>CXA1_HUMAN</name>
<gene>
    <name type="primary">GJA1</name>
    <name type="synonym">GJAL</name>
</gene>
<comment type="function">
    <text evidence="1 2">Gap junction protein that acts as a regulator of bladder capacity. A gap junction consists of a cluster of closely packed pairs of transmembrane channels, the connexons, through which materials of low MW diffuse from one cell to a neighboring cell. May play a critical role in the physiology of hearing by participating in the recycling of potassium to the cochlear endolymph. Negative regulator of bladder functional capacity: acts by enhancing intercellular electrical and chemical transmission, thus sensitizing bladder muscles to cholinergic neural stimuli and causing them to contract (By similarity). May play a role in cell growth inhibition through the regulation of NOV expression and localization. Plays an essential role in gap junction communication in the ventricles (By similarity).</text>
</comment>
<comment type="subunit">
    <text evidence="1 2 8 14 15 20">A connexon is composed of a hexamer of connexins. Interacts (via C-terminus) with TJP1 (By similarity). Interacts (via C-terminus) with SRC (via SH3 domain) (By similarity). Interacts (not ubiquitinated) with UBQLN4 (via UBA domain) (By similarity). Interacts with SGSM3 and CNST (By similarity). Interacts with RIC1/CIP150. Interacts with CSNK1D. Interacts with NOV (PubMed:15181016, PubMed:15213231). Interacts with TMEM65 (By similarity). Interacts with ANK3/ANKG and PKP2 (By similarity).</text>
</comment>
<comment type="interaction">
    <interactant intactId="EBI-1103439">
        <id>P17302</id>
    </interactant>
    <interactant intactId="EBI-2875816">
        <id>Q9NP61</id>
        <label>ARFGAP3</label>
    </interactant>
    <organismsDiffer>false</organismsDiffer>
    <experiments>3</experiments>
</comment>
<comment type="interaction">
    <interactant intactId="EBI-1103439">
        <id>P17302</id>
    </interactant>
    <interactant intactId="EBI-747505">
        <id>Q8TAB5</id>
        <label>C1orf216</label>
    </interactant>
    <organismsDiffer>false</organismsDiffer>
    <experiments>3</experiments>
</comment>
<comment type="interaction">
    <interactant intactId="EBI-1103439">
        <id>P17302</id>
    </interactant>
    <interactant intactId="EBI-625022">
        <id>O43889-2</id>
        <label>CREB3</label>
    </interactant>
    <organismsDiffer>false</organismsDiffer>
    <experiments>4</experiments>
</comment>
<comment type="interaction">
    <interactant intactId="EBI-1103439">
        <id>P17302</id>
    </interactant>
    <interactant intactId="EBI-9087876">
        <id>P48730-2</id>
        <label>CSNK1D</label>
    </interactant>
    <organismsDiffer>false</organismsDiffer>
    <experiments>3</experiments>
</comment>
<comment type="interaction">
    <interactant intactId="EBI-1103439">
        <id>P17302</id>
    </interactant>
    <interactant intactId="EBI-6900677">
        <id>Q02487-1</id>
        <label>DSC2</label>
    </interactant>
    <organismsDiffer>false</organismsDiffer>
    <experiments>2</experiments>
</comment>
<comment type="interaction">
    <interactant intactId="EBI-1103439">
        <id>P17302</id>
    </interactant>
    <interactant intactId="EBI-10317425">
        <id>Q9NZG7</id>
        <label>NINJ2</label>
    </interactant>
    <organismsDiffer>false</organismsDiffer>
    <experiments>3</experiments>
</comment>
<comment type="interaction">
    <interactant intactId="EBI-1103439">
        <id>P17302</id>
    </interactant>
    <interactant intactId="EBI-10485931">
        <id>Q5VZY2</id>
        <label>PLPP4</label>
    </interactant>
    <organismsDiffer>false</organismsDiffer>
    <experiments>3</experiments>
</comment>
<comment type="interaction">
    <interactant intactId="EBI-1103439">
        <id>P17302</id>
    </interactant>
    <interactant intactId="EBI-79553">
        <id>Q07157</id>
        <label>TJP1</label>
    </interactant>
    <organismsDiffer>false</organismsDiffer>
    <experiments>3</experiments>
</comment>
<comment type="interaction">
    <interactant intactId="EBI-1103439">
        <id>P17302</id>
    </interactant>
    <interactant intactId="EBI-10694905">
        <id>Q5BJH2-2</id>
        <label>TMEM128</label>
    </interactant>
    <organismsDiffer>false</organismsDiffer>
    <experiments>3</experiments>
</comment>
<comment type="interaction">
    <interactant intactId="EBI-1103439">
        <id>P17302</id>
    </interactant>
    <interactant intactId="EBI-2548832">
        <id>Q8N661</id>
        <label>TMEM86B</label>
    </interactant>
    <organismsDiffer>false</organismsDiffer>
    <experiments>3</experiments>
</comment>
<comment type="subcellular location">
    <subcellularLocation>
        <location evidence="32 37">Cell membrane</location>
        <topology evidence="4">Multi-pass membrane protein</topology>
    </subcellularLocation>
    <subcellularLocation>
        <location evidence="32 37">Cell junction</location>
        <location evidence="32 37">Gap junction</location>
    </subcellularLocation>
    <subcellularLocation>
        <location evidence="2">Endoplasmic reticulum</location>
    </subcellularLocation>
    <text evidence="2">Localizes at the intercalated disk (ICD) in cardiomyocytes and the proper localization at ICD is dependent on TMEM65.</text>
</comment>
<comment type="tissue specificity">
    <text evidence="7 29">Expressed at intercalated disks in the heart (at protein level) (PubMed:11741837, PubMed:18662195). Expressed in the fetal cochlea (PubMed:11741837).</text>
</comment>
<comment type="PTM">
    <text evidence="1 3 8 10 16">Phosphorylated at Ser-368 by PRKCG; phosphorylation induces disassembly of gap junction plaques and inhibition of gap junction activity (By similarity). Phosphorylation at Ser-325, Ser-328 and Ser-330 by CK1 modulates gap junction assembly. Phosphorylation at Ser-368 by PRKCD triggers its internalization into small vesicles leading to proteasome-mediated degradation (By similarity).</text>
</comment>
<comment type="PTM">
    <text evidence="32">Sumoylated with SUMO1, SUMO2 and SUMO3, which may regulate the level of functional Cx43 gap junctions at the plasma membrane. May be desumoylated by SENP1 or SENP2.</text>
</comment>
<comment type="PTM">
    <text evidence="2">S-nitrosylation at Cys-271 is enriched at the muscle endothelial gap junction in arteries, it augments channel permeability and may regulate of smooth muscle cell to endothelial cell communication.</text>
</comment>
<comment type="PTM">
    <text evidence="2">Acetylated in the developing cortex; leading to delocalization from the cell membrane.</text>
</comment>
<comment type="disease" evidence="26">
    <disease id="DI-01222">
        <name>Oculodentodigital dysplasia</name>
        <acronym>ODDD</acronym>
        <description>A disease characterized by a typical facial appearance and variable involvement of the eyes, dentition, and fingers. Characteristic facial features include a narrow, pinched nose with hypoplastic alae nasi, prominent columella and thin anteverted nares together with a narrow nasal bridge, and prominent epicanthic folds giving the impression of hypertelorism. The teeth are usually small and carious. Typical eye findings include microphthalmia and microcornea. The characteristic digital malformation is complete syndactyly of the fourth and fifth fingers (syndactyly type III) but the third finger may be involved and associated camptodactyly is a common finding. Cardiac abnormalities are observed in rare instances.</description>
        <dbReference type="MIM" id="164200"/>
    </disease>
    <text>The disease is caused by variants affecting the gene represented in this entry.</text>
</comment>
<comment type="disease" evidence="26">
    <disease id="DI-01251">
        <name>Oculodentodigital dysplasia, autosomal recessive</name>
        <acronym>ODDD-AR</acronym>
        <description>A disease characterized by a typical facial appearance and variable involvement of the eyes, dentition, and fingers. Characteristic facial features include a narrow, pinched nose with hypoplastic alae nasi, prominent columella and thin anteverted nares together with a narrow nasal bridge, and prominent epicanthic folds giving the impression of hypertelorism. The teeth are usually small and carious. Typical eye findings include microphthalmia and microcornea. The characteristic digital malformation is complete syndactyly of the fourth and fifth fingers (syndactyly type III) but the third finger may be involved and associated camptodactyly is a common finding. Cardiac abnormalities are observed in rare instances.</description>
        <dbReference type="MIM" id="257850"/>
    </disease>
    <text>The disease is caused by variants affecting the gene represented in this entry.</text>
</comment>
<comment type="disease" evidence="11">
    <disease id="DI-02352">
        <name>Syndactyly 3</name>
        <acronym>SDTY3</acronym>
        <description>A form of syndactyly, a congenital anomaly of the hand or foot marked by persistence of the webbing between adjacent digits that are more or less completely attached. In SDTY3, there is usually complete and bilateral syndactyly between the fourth and fifth fingers. Usually it is soft tissue syndactyly but occasionally the distal phalanges are fused. The fifth finger is short with absent or rudimentary middle phalanx. The feet are not affected.</description>
        <dbReference type="MIM" id="186100"/>
    </disease>
    <text>The disease may be caused by variants affecting the gene represented in this entry.</text>
</comment>
<comment type="disease" evidence="6">
    <disease id="DI-01799">
        <name>Hypoplastic left heart syndrome 1</name>
        <acronym>HLHS1</acronym>
        <description>A syndrome due to defective development of the aorta proximal to the entrance of the ductus arteriosus, and hypoplasia of the left ventricle and mitral valve. As a result of the abnormal circulation, the ductus arteriosus and foramen ovale are patent and the right atrium, right ventricle, and pulmonary artery are enlarged.</description>
        <dbReference type="MIM" id="241550"/>
    </disease>
    <text>The disease may be caused by variants affecting the gene represented in this entry.</text>
</comment>
<comment type="disease" evidence="12">
    <disease id="DI-02798">
        <name>Hallermann-Streiff syndrome</name>
        <acronym>HSS</acronym>
        <description>A disorder characterized by a typical skull shape (brachycephaly with frontal bossing), hypotrichosis, microphthalmia, cataracts, beaked nose, micrognathia, skin atrophy, dental anomalies and proportionate short stature. Intellectual disability is present in a minority of cases.</description>
        <dbReference type="MIM" id="234100"/>
    </disease>
    <text>The disease is caused by variants affecting the gene represented in this entry.</text>
</comment>
<comment type="disease" evidence="34">
    <disease id="DI-03897">
        <name>Craniometaphyseal dysplasia, autosomal recessive</name>
        <acronym>CMDR</acronym>
        <description>An osteochondrodysplasia characterized by hyperostosis and sclerosis of the craniofacial bones associated with abnormal modeling of the metaphyses. Sclerosis of the skull may lead to asymmetry of the mandible, as well as to cranial nerve compression, that may finally result in hearing loss and facial palsy.</description>
        <dbReference type="MIM" id="218400"/>
    </disease>
    <text>The disease is caused by variants affecting the gene represented in this entry.</text>
</comment>
<comment type="disease" evidence="37">
    <disease id="DI-05019">
        <name>Erythrokeratodermia variabilis et progressiva 3</name>
        <acronym>EKVP3</acronym>
        <description>A form of erythrokeratodermia variabilis et progressiva, a genodermatosis characterized by the coexistence of two independent skin lesions: transient erythema and hyperkeratosis that is usually localized but occasionally occurs in its generalized form. Clinical presentation varies significantly within a family and from one family to another. Palmoplantar keratoderma is present in around 50% of cases.</description>
        <dbReference type="MIM" id="617525"/>
    </disease>
    <text>The disease is caused by variants affecting the gene represented in this entry.</text>
</comment>
<comment type="disease" evidence="36">
    <disease id="DI-04540">
        <name>Palmoplantar keratoderma and congenital alopecia 1</name>
        <acronym>PPKCA1</acronym>
        <description>A rare autosomal dominant disorder characterized by severe hyperkeratosis of the palms and soles, and congenital hypotrichosis or alopecia. Dystrophic nail changes occur in some patients.</description>
        <dbReference type="MIM" id="104100"/>
    </disease>
    <text>The disease is caused by variants affecting the gene represented in this entry.</text>
</comment>
<comment type="similarity">
    <text evidence="41">Belongs to the connexin family. Alpha-type (group II) subfamily.</text>
</comment>
<comment type="caution">
    <text evidence="41">PubMed:7715640 reported a mutation Pro-364 linked to congenital heart diseases. PubMed:8873667 later shown that it is an artifact.</text>
</comment>
<comment type="caution">
    <text evidence="42">PubMed:11741837 reported 2 mutations (Phe-11 and Ala-24) linked to non-syndromic autosomal recessive deafness (DFNBG). These mutations have subsequently been shown (PubMed:12457340) to involve the pseudogene of connexin-43 located on chromosome 5.</text>
</comment>
<feature type="initiator methionine" description="Removed" evidence="1">
    <location>
        <position position="1"/>
    </location>
</feature>
<feature type="chain" id="PRO_0000057801" description="Gap junction alpha-1 protein">
    <location>
        <begin position="2"/>
        <end position="382"/>
    </location>
</feature>
<feature type="topological domain" description="Cytoplasmic" evidence="1">
    <location>
        <begin position="2"/>
        <end position="23"/>
    </location>
</feature>
<feature type="transmembrane region" description="Helical" evidence="4">
    <location>
        <begin position="24"/>
        <end position="44"/>
    </location>
</feature>
<feature type="topological domain" description="Extracellular" evidence="1">
    <location>
        <begin position="45"/>
        <end position="76"/>
    </location>
</feature>
<feature type="transmembrane region" description="Helical" evidence="4">
    <location>
        <begin position="77"/>
        <end position="97"/>
    </location>
</feature>
<feature type="topological domain" description="Cytoplasmic" evidence="1">
    <location>
        <begin position="98"/>
        <end position="155"/>
    </location>
</feature>
<feature type="transmembrane region" description="Helical" evidence="4">
    <location>
        <begin position="156"/>
        <end position="176"/>
    </location>
</feature>
<feature type="topological domain" description="Extracellular" evidence="1">
    <location>
        <begin position="177"/>
        <end position="207"/>
    </location>
</feature>
<feature type="transmembrane region" description="Helical" evidence="4">
    <location>
        <begin position="208"/>
        <end position="228"/>
    </location>
</feature>
<feature type="topological domain" description="Cytoplasmic" evidence="1">
    <location>
        <begin position="229"/>
        <end position="382"/>
    </location>
</feature>
<feature type="region of interest" description="Interaction with NOV" evidence="1">
    <location>
        <begin position="244"/>
        <end position="382"/>
    </location>
</feature>
<feature type="region of interest" description="Interaction with UBQLN4" evidence="2">
    <location>
        <begin position="264"/>
        <end position="382"/>
    </location>
</feature>
<feature type="region of interest" description="Disordered" evidence="5">
    <location>
        <begin position="317"/>
        <end position="382"/>
    </location>
</feature>
<feature type="compositionally biased region" description="Polar residues" evidence="5">
    <location>
        <begin position="317"/>
        <end position="332"/>
    </location>
</feature>
<feature type="compositionally biased region" description="Low complexity" evidence="5">
    <location>
        <begin position="362"/>
        <end position="374"/>
    </location>
</feature>
<feature type="modified residue" description="Phosphoserine" evidence="1">
    <location>
        <position position="5"/>
    </location>
</feature>
<feature type="modified residue" description="Phosphotyrosine" evidence="2">
    <location>
        <position position="247"/>
    </location>
</feature>
<feature type="modified residue" description="Phosphoserine" evidence="16 43">
    <location>
        <position position="255"/>
    </location>
</feature>
<feature type="modified residue" description="Phosphoserine" evidence="10 16">
    <location>
        <position position="262"/>
    </location>
</feature>
<feature type="modified residue" description="S-nitrosocysteine" evidence="2">
    <location>
        <position position="271"/>
    </location>
</feature>
<feature type="modified residue" description="Phosphothreonine" evidence="2">
    <location>
        <position position="275"/>
    </location>
</feature>
<feature type="modified residue" description="Phosphoserine" evidence="2">
    <location>
        <position position="306"/>
    </location>
</feature>
<feature type="modified residue" description="Phosphoserine" evidence="43">
    <location>
        <position position="314"/>
    </location>
</feature>
<feature type="modified residue" description="Phosphoserine; by CK1" evidence="8">
    <location>
        <position position="325"/>
    </location>
</feature>
<feature type="modified residue" description="Phosphothreonine" evidence="2">
    <location>
        <position position="326"/>
    </location>
</feature>
<feature type="modified residue" description="Phosphoserine; by CK1" evidence="8">
    <location>
        <position position="328"/>
    </location>
</feature>
<feature type="modified residue" description="Phosphoserine; by CK1" evidence="8">
    <location>
        <position position="330"/>
    </location>
</feature>
<feature type="modified residue" description="Phosphoserine" evidence="43">
    <location>
        <position position="344"/>
    </location>
</feature>
<feature type="modified residue" description="Phosphoserine" evidence="2">
    <location>
        <position position="365"/>
    </location>
</feature>
<feature type="modified residue" description="Phosphoserine; by PKC/PRKCG and PKC/PRKCD" evidence="2">
    <location>
        <position position="368"/>
    </location>
</feature>
<feature type="modified residue" description="Phosphoserine" evidence="2">
    <location>
        <position position="369"/>
    </location>
</feature>
<feature type="modified residue" description="Phosphoserine" evidence="1">
    <location>
        <position position="373"/>
    </location>
</feature>
<feature type="disulfide bond" evidence="40">
    <location>
        <begin position="54"/>
        <end position="192"/>
    </location>
</feature>
<feature type="disulfide bond" evidence="40">
    <location>
        <begin position="187"/>
        <end position="198"/>
    </location>
</feature>
<feature type="cross-link" description="Glycyl lysine isopeptide (Lys-Gly) (interchain with G-Cter in SUMO)" evidence="32">
    <location>
        <position position="144"/>
    </location>
</feature>
<feature type="cross-link" description="Glycyl lysine isopeptide (Lys-Gly) (interchain with G-Cter in SUMO)" evidence="32">
    <location>
        <position position="237"/>
    </location>
</feature>
<feature type="sequence variant" id="VAR_058990" description="In ODDD." evidence="28">
    <original>G</original>
    <variation>V</variation>
    <location>
        <position position="2"/>
    </location>
</feature>
<feature type="sequence variant" id="VAR_058991" description="In ODDD." evidence="30">
    <original>L</original>
    <variation>V</variation>
    <location>
        <position position="7"/>
    </location>
</feature>
<feature type="sequence variant" id="VAR_075754" description="In PPKCA1; can form functional gap junctions; results in enhanced hemichannel activity that causes increased cell death; dbSNP:rs864309644." evidence="36">
    <original>G</original>
    <variation>V</variation>
    <location>
        <position position="8"/>
    </location>
</feature>
<feature type="sequence variant" id="VAR_078238" description="In ODDD." evidence="38">
    <original>L</original>
    <variation>I</variation>
    <location>
        <position position="11"/>
    </location>
</feature>
<feature type="sequence variant" id="VAR_058992" description="In ODDD; dbSNP:rs121912969." evidence="24 31">
    <original>L</original>
    <variation>P</variation>
    <location>
        <position position="11"/>
    </location>
</feature>
<feature type="sequence variant" id="VAR_015747" description="In ODDD; dbSNP:rs104893961." evidence="9">
    <original>Y</original>
    <variation>S</variation>
    <location>
        <position position="17"/>
    </location>
</feature>
<feature type="sequence variant" id="VAR_015748" description="In ODDD; dbSNP:rs104893962." evidence="9">
    <original>S</original>
    <variation>P</variation>
    <location>
        <position position="18"/>
    </location>
</feature>
<feature type="sequence variant" id="VAR_015749" description="In ODDD; dbSNP:rs104893963." evidence="9">
    <original>G</original>
    <variation>R</variation>
    <location>
        <position position="21"/>
    </location>
</feature>
<feature type="sequence variant" id="VAR_015750" description="In ODDD; dbSNP:rs104893964." evidence="9">
    <original>G</original>
    <variation>E</variation>
    <location>
        <position position="22"/>
    </location>
</feature>
<feature type="sequence variant" id="VAR_015751" description="In ODDD." evidence="9">
    <original>K</original>
    <variation>T</variation>
    <location>
        <position position="23"/>
    </location>
</feature>
<feature type="sequence variant" id="VAR_038356" description="In ODDD." evidence="11">
    <original>S</original>
    <variation>P</variation>
    <location>
        <position position="27"/>
    </location>
</feature>
<feature type="sequence variant" id="VAR_038357" description="In ODDD." evidence="11">
    <original>I</original>
    <variation>M</variation>
    <location>
        <position position="31"/>
    </location>
</feature>
<feature type="sequence variant" id="VAR_015752" description="In ODDD; dbSNP:rs1554200992." evidence="9 11 23 30">
    <original>A</original>
    <variation>V</variation>
    <location>
        <position position="40"/>
    </location>
</feature>
<feature type="sequence variant" id="VAR_070439" description="In ODDD." evidence="31">
    <location>
        <begin position="41"/>
        <end position="44"/>
    </location>
</feature>
<feature type="sequence variant" id="VAR_058993" description="Found in a patient with hidrotic ectodermal dysplasia, abortive features of oculodentodigital dysplasia and extensive hyperkeratosis of the skin; uncertain significance; the patient also carries GJB2 variant H-127." evidence="18">
    <original>V</original>
    <variation>L</variation>
    <location>
        <position position="41"/>
    </location>
</feature>
<feature type="sequence variant" id="VAR_075755" description="In EKVP3; loss of localization to the plasma membrane, retention in the Golgi apparatus; dbSNP:rs794729675." evidence="37">
    <original>A</original>
    <variation>V</variation>
    <location>
        <position position="44"/>
    </location>
</feature>
<feature type="sequence variant" id="VAR_071009" description="In ODDD." evidence="35">
    <original>D</original>
    <variation>H</variation>
    <location>
        <position position="47"/>
    </location>
</feature>
<feature type="sequence variant" id="VAR_015753" description="In ODDD." evidence="9">
    <original>Q</original>
    <variation>K</variation>
    <location>
        <position position="49"/>
    </location>
</feature>
<feature type="sequence variant" id="VAR_058994" description="In ODDD." evidence="30">
    <original>Q</original>
    <variation>P</variation>
    <location>
        <position position="49"/>
    </location>
</feature>
<feature type="sequence variant" id="VAR_058995" description="In ODDD." evidence="30">
    <original>Q</original>
    <variation>QQ</variation>
    <location>
        <position position="49"/>
    </location>
</feature>
<feature type="sequence variant" id="VAR_015754" description="In ODDD." evidence="9">
    <original>F</original>
    <variation>FF</variation>
    <location>
        <position position="52"/>
    </location>
</feature>
<feature type="sequence variant" id="VAR_058996" description="In ODDD." evidence="21">
    <original>P</original>
    <variation>H</variation>
    <location>
        <position position="59"/>
    </location>
</feature>
<feature type="sequence variant" id="VAR_038358" description="In ODDD." evidence="11">
    <original>S</original>
    <variation>Y</variation>
    <location>
        <position position="69"/>
    </location>
</feature>
<feature type="sequence variant" id="VAR_058997" description="In HSS; overlapping features with oculodentodigital dysplasia; dbSNP:rs267606844." evidence="12">
    <original>R</original>
    <variation>H</variation>
    <location>
        <position position="76"/>
    </location>
</feature>
<feature type="sequence variant" id="VAR_015755" description="In ODDD; dbSNP:rs267606845." evidence="9">
    <original>R</original>
    <variation>S</variation>
    <location>
        <position position="76"/>
    </location>
</feature>
<feature type="sequence variant" id="VAR_071010" description="In ODDD; de novo mutation found in a sporadic case." evidence="35">
    <original>S</original>
    <variation>Y</variation>
    <location>
        <position position="86"/>
    </location>
</feature>
<feature type="sequence variant" id="VAR_015756" description="In ODDD." evidence="9">
    <original>L</original>
    <variation>V</variation>
    <location>
        <position position="90"/>
    </location>
</feature>
<feature type="sequence variant" id="VAR_058998" description="In ODDD." evidence="22">
    <original>H</original>
    <variation>R</variation>
    <location>
        <position position="95"/>
    </location>
</feature>
<feature type="sequence variant" id="VAR_058999" description="In ODDD." evidence="30">
    <original>V</original>
    <variation>A</variation>
    <location>
        <position position="96"/>
    </location>
</feature>
<feature type="sequence variant" id="VAR_059000" description="In ODDD." evidence="25">
    <original>V</original>
    <variation>E</variation>
    <location>
        <position position="96"/>
    </location>
</feature>
<feature type="sequence variant" id="VAR_059001" description="In ODDD; dbSNP:rs28931601." evidence="13">
    <original>V</original>
    <variation>M</variation>
    <location>
        <position position="96"/>
    </location>
</feature>
<feature type="sequence variant" id="VAR_015757" description="In ODDD." evidence="9">
    <original>Y</original>
    <variation>C</variation>
    <location>
        <position position="98"/>
    </location>
</feature>
<feature type="sequence variant" id="VAR_015758" description="In ODDD; dbSNP:rs1554201011." evidence="9">
    <original>K</original>
    <variation>N</variation>
    <location>
        <position position="102"/>
    </location>
</feature>
<feature type="sequence variant" id="VAR_059002" description="In ODDD." evidence="30">
    <original>L</original>
    <variation>P</variation>
    <location>
        <position position="106"/>
    </location>
</feature>
<feature type="sequence variant" id="VAR_071011" description="In ODDD." evidence="35">
    <original>L</original>
    <variation>R</variation>
    <location>
        <position position="106"/>
    </location>
</feature>
<feature type="sequence variant" id="VAR_059003" description="In ODDD." evidence="23">
    <original>E</original>
    <variation>D</variation>
    <location>
        <position position="110"/>
    </location>
</feature>
<feature type="sequence variant" id="VAR_038359" description="In ODDD." evidence="11 25">
    <original>L</original>
    <variation>P</variation>
    <location>
        <position position="113"/>
    </location>
</feature>
<feature type="sequence variant" id="VAR_015759" description="In ODDD; dbSNP:rs1554201017." evidence="9">
    <original>I</original>
    <variation>T</variation>
    <location>
        <position position="130"/>
    </location>
</feature>
<feature type="sequence variant" id="VAR_015760" description="In ODDD." evidence="9">
    <original>K</original>
    <variation>E</variation>
    <location>
        <position position="134"/>
    </location>
</feature>
<feature type="sequence variant" id="VAR_038360" description="In ODDD." evidence="11">
    <original>K</original>
    <variation>N</variation>
    <location>
        <position position="134"/>
    </location>
</feature>
<feature type="sequence variant" id="VAR_015761" description="In ODDD." evidence="9">
    <original>G</original>
    <variation>R</variation>
    <location>
        <position position="138"/>
    </location>
</feature>
<feature type="sequence variant" id="VAR_038361" description="In SDTY3; dbSNP:rs28931600." evidence="11">
    <original>G</original>
    <variation>S</variation>
    <location>
        <position position="143"/>
    </location>
</feature>
<feature type="sequence variant" id="VAR_059004" description="In ODDD; dbSNP:rs1057518872." evidence="23">
    <original>M</original>
    <variation>T</variation>
    <location>
        <position position="147"/>
    </location>
</feature>
<feature type="sequence variant" id="VAR_014095" description="In ODDD; dbSNP:rs962041031." evidence="11">
    <original>R</original>
    <variation>Q</variation>
    <location>
        <position position="148"/>
    </location>
</feature>
<feature type="sequence variant" id="VAR_059005" description="In ODDD." evidence="27 30">
    <original>T</original>
    <variation>A</variation>
    <location>
        <position position="154"/>
    </location>
</feature>
<feature type="sequence variant" id="VAR_059006" description="In ODDD." evidence="25">
    <original>T</original>
    <variation>N</variation>
    <location>
        <position position="154"/>
    </location>
</feature>
<feature type="sequence variant" id="VAR_014096" description="In dbSNP:rs2228961.">
    <original>A</original>
    <variation>T</variation>
    <location>
        <position position="168"/>
    </location>
</feature>
<feature type="sequence variant" id="VAR_059007" description="In ODDD." evidence="23">
    <location>
        <position position="169"/>
    </location>
</feature>
<feature type="sequence variant" id="VAR_059008" description="In ODDD; atypical form of ODDD characterized by the predominance of the ocular involvement and by the absence of hand and/or foot syndactyly and absence of any neurologic signs; dbSNP:rs104893966." evidence="17">
    <original>H</original>
    <variation>P</variation>
    <location>
        <position position="194"/>
    </location>
</feature>
<feature type="sequence variant" id="VAR_059009" description="In ODDD." evidence="30">
    <original>S</original>
    <variation>F</variation>
    <location>
        <position position="201"/>
    </location>
</feature>
<feature type="sequence variant" id="VAR_015762" description="In ODDD; dbSNP:rs750294638." evidence="9 11 30">
    <original>R</original>
    <variation>H</variation>
    <location>
        <position position="202"/>
    </location>
</feature>
<feature type="sequence variant" id="VAR_070440" description="In ODDD; dbSNP:rs397518464." evidence="33">
    <original>K</original>
    <variation>R</variation>
    <location>
        <position position="206"/>
    </location>
</feature>
<feature type="sequence variant" id="VAR_015763" description="In ODDD; dbSNP:rs1554201043." evidence="9">
    <original>V</original>
    <variation>L</variation>
    <location>
        <position position="216"/>
    </location>
</feature>
<feature type="sequence variant" id="VAR_059010" description="In ODDD." evidence="25">
    <original>S</original>
    <variation>Y</variation>
    <location>
        <position position="220"/>
    </location>
</feature>
<feature type="sequence variant" id="VAR_075756" description="In EKVP3; loss of localization to the plasma membrane, retention in the Golgi apparatus; dbSNP:rs875989815." evidence="37">
    <original>E</original>
    <variation>D</variation>
    <location>
        <position position="227"/>
    </location>
</feature>
<feature type="sequence variant" id="VAR_070441" description="In CMDR; dbSNP:rs764670582." evidence="34">
    <original>R</original>
    <variation>Q</variation>
    <location>
        <position position="239"/>
    </location>
</feature>
<feature type="sequence variant" id="VAR_014100" description="In congenital heart malformations." evidence="19">
    <original>R</original>
    <variation>W</variation>
    <location>
        <position position="239"/>
    </location>
</feature>
<feature type="sequence variant" id="VAR_059011" description="In congenital heart malformations." evidence="19">
    <original>S</original>
    <variation>T</variation>
    <location>
        <position position="251"/>
    </location>
</feature>
<feature type="sequence variant" id="VAR_059012" description="In congenital heart malformations." evidence="19">
    <original>A</original>
    <variation>P</variation>
    <location>
        <position position="253"/>
    </location>
</feature>
<feature type="sequence variant" id="VAR_015764" description="In dbSNP:rs17653265." evidence="9">
    <original>A</original>
    <variation>V</variation>
    <location>
        <position position="253"/>
    </location>
</feature>
<feature type="sequence variant" id="VAR_014101" description="In congenital heart malformations." evidence="19">
    <original>P</original>
    <variation>L</variation>
    <location>
        <position position="283"/>
    </location>
</feature>
<feature type="sequence variant" id="VAR_014102" description="In congenital heart malformations." evidence="19">
    <original>T</original>
    <variation>N</variation>
    <location>
        <position position="290"/>
    </location>
</feature>
<feature type="sequence variant" id="VAR_059013" evidence="39">
    <original>T</original>
    <variation>A</variation>
    <location>
        <position position="326"/>
    </location>
</feature>
<feature type="sequence variant" id="VAR_059014" description="In heart malformations." evidence="39">
    <original>E</original>
    <variation>G</variation>
    <location>
        <position position="352"/>
    </location>
</feature>
<feature type="sequence variant" id="VAR_032924" description="In HLHS1; uncertain significance; abolishes phosphorylation by PKA and PKC when associated with Q-376; dbSNP:rs2227885." evidence="6">
    <original>R</original>
    <variation>Q</variation>
    <location>
        <position position="362"/>
    </location>
</feature>
<feature type="sequence variant" id="VAR_059015" description="In heart malformations; shows abnormalities in the regulation of cell-cell communication as compared with cells expressing normal GJA1." evidence="39">
    <original>S</original>
    <variation>P</variation>
    <location>
        <position position="364"/>
    </location>
</feature>
<feature type="sequence variant" id="VAR_059016" description="In heart malformations." evidence="39">
    <original>S</original>
    <variation>N</variation>
    <location>
        <position position="365"/>
    </location>
</feature>
<feature type="sequence variant" id="VAR_059017" evidence="39">
    <original>S</original>
    <variation>G</variation>
    <location>
        <position position="373"/>
    </location>
</feature>
<feature type="sequence variant" id="VAR_032925" description="In HLHS1; uncertain significance; abolishes phosphorylation by PKA and PKC when associated with Q-362; dbSNP:rs104893965." evidence="6">
    <original>R</original>
    <variation>Q</variation>
    <location>
        <position position="376"/>
    </location>
</feature>
<feature type="helix" evidence="46">
    <location>
        <begin position="4"/>
        <end position="15"/>
    </location>
</feature>
<feature type="strand" evidence="45">
    <location>
        <begin position="16"/>
        <end position="18"/>
    </location>
</feature>
<feature type="helix" evidence="46">
    <location>
        <begin position="22"/>
        <end position="44"/>
    </location>
</feature>
<feature type="turn" evidence="46">
    <location>
        <begin position="45"/>
        <end position="50"/>
    </location>
</feature>
<feature type="strand" evidence="46">
    <location>
        <begin position="53"/>
        <end position="55"/>
    </location>
</feature>
<feature type="helix" evidence="46">
    <location>
        <begin position="61"/>
        <end position="69"/>
    </location>
</feature>
<feature type="helix" evidence="46">
    <location>
        <begin position="74"/>
        <end position="104"/>
    </location>
</feature>
<feature type="helix" evidence="46">
    <location>
        <begin position="152"/>
        <end position="176"/>
    </location>
</feature>
<feature type="strand" evidence="46">
    <location>
        <begin position="183"/>
        <end position="187"/>
    </location>
</feature>
<feature type="strand" evidence="46">
    <location>
        <begin position="190"/>
        <end position="194"/>
    </location>
</feature>
<feature type="strand" evidence="46">
    <location>
        <begin position="196"/>
        <end position="199"/>
    </location>
</feature>
<feature type="helix" evidence="46">
    <location>
        <begin position="203"/>
        <end position="234"/>
    </location>
</feature>
<feature type="helix" evidence="44">
    <location>
        <begin position="240"/>
        <end position="242"/>
    </location>
</feature>
<feature type="helix" evidence="44">
    <location>
        <begin position="246"/>
        <end position="253"/>
    </location>
</feature>
<feature type="helix" evidence="44">
    <location>
        <begin position="255"/>
        <end position="257"/>
    </location>
</feature>
<protein>
    <recommendedName>
        <fullName>Gap junction alpha-1 protein</fullName>
    </recommendedName>
    <alternativeName>
        <fullName>Connexin-43</fullName>
        <shortName>Cx43</shortName>
    </alternativeName>
    <alternativeName>
        <fullName>Gap junction 43 kDa heart protein</fullName>
    </alternativeName>
</protein>
<sequence length="382" mass="43008">MGDWSALGKLLDKVQAYSTAGGKVWLSVLFIFRILLLGTAVESAWGDEQSAFRCNTQQPGCENVCYDKSFPISHVRFWVLQIIFVSVPTLLYLAHVFYVMRKEEKLNKKEEELKVAQTDGVNVDMHLKQIEIKKFKYGIEEHGKVKMRGGLLRTYIISILFKSIFEVAFLLIQWYIYGFSLSAVYTCKRDPCPHQVDCFLSRPTEKTIFIIFMLVVSLVSLALNIIELFYVFFKGVKDRVKGKSDPYHATSGALSPAKDCGSQKYAYFNGCSSPTAPLSPMSPPGYKLVTGDRNNSSCRNYNKQASEQNWANYSAEQNRMGQAGSTISNSHAQPFDFPDDNQNSKKLAAGHELQPLAIVDQRPSSRASSRASSRPRPDDLEI</sequence>
<accession>P17302</accession>
<accession>B2R5U9</accession>
<accession>Q6FHU1</accession>
<accession>Q9Y5I8</accession>
<evidence type="ECO:0000250" key="1">
    <source>
        <dbReference type="UniProtKB" id="P08050"/>
    </source>
</evidence>
<evidence type="ECO:0000250" key="2">
    <source>
        <dbReference type="UniProtKB" id="P23242"/>
    </source>
</evidence>
<evidence type="ECO:0000250" key="3">
    <source>
        <dbReference type="UniProtKB" id="Q6TYA7"/>
    </source>
</evidence>
<evidence type="ECO:0000255" key="4"/>
<evidence type="ECO:0000256" key="5">
    <source>
        <dbReference type="SAM" id="MobiDB-lite"/>
    </source>
</evidence>
<evidence type="ECO:0000269" key="6">
    <source>
    </source>
</evidence>
<evidence type="ECO:0000269" key="7">
    <source>
    </source>
</evidence>
<evidence type="ECO:0000269" key="8">
    <source>
    </source>
</evidence>
<evidence type="ECO:0000269" key="9">
    <source>
    </source>
</evidence>
<evidence type="ECO:0000269" key="10">
    <source>
    </source>
</evidence>
<evidence type="ECO:0000269" key="11">
    <source>
    </source>
</evidence>
<evidence type="ECO:0000269" key="12">
    <source>
    </source>
</evidence>
<evidence type="ECO:0000269" key="13">
    <source>
    </source>
</evidence>
<evidence type="ECO:0000269" key="14">
    <source>
    </source>
</evidence>
<evidence type="ECO:0000269" key="15">
    <source>
    </source>
</evidence>
<evidence type="ECO:0000269" key="16">
    <source>
    </source>
</evidence>
<evidence type="ECO:0000269" key="17">
    <source>
    </source>
</evidence>
<evidence type="ECO:0000269" key="18">
    <source>
    </source>
</evidence>
<evidence type="ECO:0000269" key="19">
    <source>
    </source>
</evidence>
<evidence type="ECO:0000269" key="20">
    <source>
    </source>
</evidence>
<evidence type="ECO:0000269" key="21">
    <source>
    </source>
</evidence>
<evidence type="ECO:0000269" key="22">
    <source>
    </source>
</evidence>
<evidence type="ECO:0000269" key="23">
    <source>
    </source>
</evidence>
<evidence type="ECO:0000269" key="24">
    <source>
    </source>
</evidence>
<evidence type="ECO:0000269" key="25">
    <source>
    </source>
</evidence>
<evidence type="ECO:0000269" key="26">
    <source>
    </source>
</evidence>
<evidence type="ECO:0000269" key="27">
    <source>
    </source>
</evidence>
<evidence type="ECO:0000269" key="28">
    <source>
    </source>
</evidence>
<evidence type="ECO:0000269" key="29">
    <source>
    </source>
</evidence>
<evidence type="ECO:0000269" key="30">
    <source>
    </source>
</evidence>
<evidence type="ECO:0000269" key="31">
    <source>
    </source>
</evidence>
<evidence type="ECO:0000269" key="32">
    <source>
    </source>
</evidence>
<evidence type="ECO:0000269" key="33">
    <source>
    </source>
</evidence>
<evidence type="ECO:0000269" key="34">
    <source>
    </source>
</evidence>
<evidence type="ECO:0000269" key="35">
    <source>
    </source>
</evidence>
<evidence type="ECO:0000269" key="36">
    <source>
    </source>
</evidence>
<evidence type="ECO:0000269" key="37">
    <source>
    </source>
</evidence>
<evidence type="ECO:0000269" key="38">
    <source>
    </source>
</evidence>
<evidence type="ECO:0000269" key="39">
    <source>
    </source>
</evidence>
<evidence type="ECO:0000269" key="40">
    <source>
    </source>
</evidence>
<evidence type="ECO:0000305" key="41"/>
<evidence type="ECO:0000305" key="42">
    <source>
    </source>
</evidence>
<evidence type="ECO:0007744" key="43">
    <source>
    </source>
</evidence>
<evidence type="ECO:0007829" key="44">
    <source>
        <dbReference type="PDB" id="2LL2"/>
    </source>
</evidence>
<evidence type="ECO:0007829" key="45">
    <source>
        <dbReference type="PDB" id="7F92"/>
    </source>
</evidence>
<evidence type="ECO:0007829" key="46">
    <source>
        <dbReference type="PDB" id="7Z1T"/>
    </source>
</evidence>
<organism>
    <name type="scientific">Homo sapiens</name>
    <name type="common">Human</name>
    <dbReference type="NCBI Taxonomy" id="9606"/>
    <lineage>
        <taxon>Eukaryota</taxon>
        <taxon>Metazoa</taxon>
        <taxon>Chordata</taxon>
        <taxon>Craniata</taxon>
        <taxon>Vertebrata</taxon>
        <taxon>Euteleostomi</taxon>
        <taxon>Mammalia</taxon>
        <taxon>Eutheria</taxon>
        <taxon>Euarchontoglires</taxon>
        <taxon>Primates</taxon>
        <taxon>Haplorrhini</taxon>
        <taxon>Catarrhini</taxon>
        <taxon>Hominidae</taxon>
        <taxon>Homo</taxon>
    </lineage>
</organism>
<keyword id="KW-0002">3D-structure</keyword>
<keyword id="KW-0007">Acetylation</keyword>
<keyword id="KW-0898">Cataract</keyword>
<keyword id="KW-0965">Cell junction</keyword>
<keyword id="KW-1003">Cell membrane</keyword>
<keyword id="KW-0225">Disease variant</keyword>
<keyword id="KW-1015">Disulfide bond</keyword>
<keyword id="KW-0256">Endoplasmic reticulum</keyword>
<keyword id="KW-0303">Gap junction</keyword>
<keyword id="KW-1063">Hypotrichosis</keyword>
<keyword id="KW-1017">Isopeptide bond</keyword>
<keyword id="KW-0472">Membrane</keyword>
<keyword id="KW-1007">Palmoplantar keratoderma</keyword>
<keyword id="KW-0597">Phosphoprotein</keyword>
<keyword id="KW-1267">Proteomics identification</keyword>
<keyword id="KW-1185">Reference proteome</keyword>
<keyword id="KW-0702">S-nitrosylation</keyword>
<keyword id="KW-0812">Transmembrane</keyword>
<keyword id="KW-1133">Transmembrane helix</keyword>
<keyword id="KW-0832">Ubl conjugation</keyword>
<reference key="1">
    <citation type="journal article" date="1990" name="J. Cell Biol.">
        <title>Molecular characterization and functional expression of the human cardiac gap junction channel.</title>
        <authorList>
            <person name="Fishman G.I."/>
            <person name="Spray D.C."/>
            <person name="Leinwand L.A."/>
        </authorList>
    </citation>
    <scope>NUCLEOTIDE SEQUENCE [MRNA]</scope>
    <source>
        <tissue>Heart muscle</tissue>
    </source>
</reference>
<reference key="2">
    <citation type="journal article" date="1991" name="Genomics">
        <title>The human connexin gene family of gap junction proteins: distinct chromosomal locations but similar structures.</title>
        <authorList>
            <person name="Fishman G.I."/>
            <person name="Eddy R.L."/>
            <person name="Shows T.B."/>
            <person name="Rosenthal L."/>
            <person name="Leinwand L.A."/>
        </authorList>
    </citation>
    <scope>NUCLEOTIDE SEQUENCE [MRNA]</scope>
</reference>
<reference key="3">
    <citation type="journal article" date="1999" name="Eur. Heart J.">
        <title>Sporadic cases of dilated cardiomyopathies associated with atrioventricular conduction defects are not linked to mutation within the connexins 40 and 43 genes.</title>
        <authorList>
            <person name="Haefliger J.-A."/>
            <person name="Goy J.J."/>
            <person name="Waeber G."/>
        </authorList>
    </citation>
    <scope>NUCLEOTIDE SEQUENCE [GENOMIC DNA]</scope>
</reference>
<reference key="4">
    <citation type="submission" date="2004-06" db="EMBL/GenBank/DDBJ databases">
        <title>Cloning of human full open reading frames in Gateway(TM) system entry vector (pDONR201).</title>
        <authorList>
            <person name="Halleck A."/>
            <person name="Ebert L."/>
            <person name="Mkoundinya M."/>
            <person name="Schick M."/>
            <person name="Eisenstein S."/>
            <person name="Neubert P."/>
            <person name="Kstrang K."/>
            <person name="Schatten R."/>
            <person name="Shen B."/>
            <person name="Henze S."/>
            <person name="Mar W."/>
            <person name="Korn B."/>
            <person name="Zuo D."/>
            <person name="Hu Y."/>
            <person name="LaBaer J."/>
        </authorList>
    </citation>
    <scope>NUCLEOTIDE SEQUENCE [LARGE SCALE MRNA]</scope>
</reference>
<reference key="5">
    <citation type="journal article" date="2004" name="Nat. Genet.">
        <title>Complete sequencing and characterization of 21,243 full-length human cDNAs.</title>
        <authorList>
            <person name="Ota T."/>
            <person name="Suzuki Y."/>
            <person name="Nishikawa T."/>
            <person name="Otsuki T."/>
            <person name="Sugiyama T."/>
            <person name="Irie R."/>
            <person name="Wakamatsu A."/>
            <person name="Hayashi K."/>
            <person name="Sato H."/>
            <person name="Nagai K."/>
            <person name="Kimura K."/>
            <person name="Makita H."/>
            <person name="Sekine M."/>
            <person name="Obayashi M."/>
            <person name="Nishi T."/>
            <person name="Shibahara T."/>
            <person name="Tanaka T."/>
            <person name="Ishii S."/>
            <person name="Yamamoto J."/>
            <person name="Saito K."/>
            <person name="Kawai Y."/>
            <person name="Isono Y."/>
            <person name="Nakamura Y."/>
            <person name="Nagahari K."/>
            <person name="Murakami K."/>
            <person name="Yasuda T."/>
            <person name="Iwayanagi T."/>
            <person name="Wagatsuma M."/>
            <person name="Shiratori A."/>
            <person name="Sudo H."/>
            <person name="Hosoiri T."/>
            <person name="Kaku Y."/>
            <person name="Kodaira H."/>
            <person name="Kondo H."/>
            <person name="Sugawara M."/>
            <person name="Takahashi M."/>
            <person name="Kanda K."/>
            <person name="Yokoi T."/>
            <person name="Furuya T."/>
            <person name="Kikkawa E."/>
            <person name="Omura Y."/>
            <person name="Abe K."/>
            <person name="Kamihara K."/>
            <person name="Katsuta N."/>
            <person name="Sato K."/>
            <person name="Tanikawa M."/>
            <person name="Yamazaki M."/>
            <person name="Ninomiya K."/>
            <person name="Ishibashi T."/>
            <person name="Yamashita H."/>
            <person name="Murakawa K."/>
            <person name="Fujimori K."/>
            <person name="Tanai H."/>
            <person name="Kimata M."/>
            <person name="Watanabe M."/>
            <person name="Hiraoka S."/>
            <person name="Chiba Y."/>
            <person name="Ishida S."/>
            <person name="Ono Y."/>
            <person name="Takiguchi S."/>
            <person name="Watanabe S."/>
            <person name="Yosida M."/>
            <person name="Hotuta T."/>
            <person name="Kusano J."/>
            <person name="Kanehori K."/>
            <person name="Takahashi-Fujii A."/>
            <person name="Hara H."/>
            <person name="Tanase T.-O."/>
            <person name="Nomura Y."/>
            <person name="Togiya S."/>
            <person name="Komai F."/>
            <person name="Hara R."/>
            <person name="Takeuchi K."/>
            <person name="Arita M."/>
            <person name="Imose N."/>
            <person name="Musashino K."/>
            <person name="Yuuki H."/>
            <person name="Oshima A."/>
            <person name="Sasaki N."/>
            <person name="Aotsuka S."/>
            <person name="Yoshikawa Y."/>
            <person name="Matsunawa H."/>
            <person name="Ichihara T."/>
            <person name="Shiohata N."/>
            <person name="Sano S."/>
            <person name="Moriya S."/>
            <person name="Momiyama H."/>
            <person name="Satoh N."/>
            <person name="Takami S."/>
            <person name="Terashima Y."/>
            <person name="Suzuki O."/>
            <person name="Nakagawa S."/>
            <person name="Senoh A."/>
            <person name="Mizoguchi H."/>
            <person name="Goto Y."/>
            <person name="Shimizu F."/>
            <person name="Wakebe H."/>
            <person name="Hishigaki H."/>
            <person name="Watanabe T."/>
            <person name="Sugiyama A."/>
            <person name="Takemoto M."/>
            <person name="Kawakami B."/>
            <person name="Yamazaki M."/>
            <person name="Watanabe K."/>
            <person name="Kumagai A."/>
            <person name="Itakura S."/>
            <person name="Fukuzumi Y."/>
            <person name="Fujimori Y."/>
            <person name="Komiyama M."/>
            <person name="Tashiro H."/>
            <person name="Tanigami A."/>
            <person name="Fujiwara T."/>
            <person name="Ono T."/>
            <person name="Yamada K."/>
            <person name="Fujii Y."/>
            <person name="Ozaki K."/>
            <person name="Hirao M."/>
            <person name="Ohmori Y."/>
            <person name="Kawabata A."/>
            <person name="Hikiji T."/>
            <person name="Kobatake N."/>
            <person name="Inagaki H."/>
            <person name="Ikema Y."/>
            <person name="Okamoto S."/>
            <person name="Okitani R."/>
            <person name="Kawakami T."/>
            <person name="Noguchi S."/>
            <person name="Itoh T."/>
            <person name="Shigeta K."/>
            <person name="Senba T."/>
            <person name="Matsumura K."/>
            <person name="Nakajima Y."/>
            <person name="Mizuno T."/>
            <person name="Morinaga M."/>
            <person name="Sasaki M."/>
            <person name="Togashi T."/>
            <person name="Oyama M."/>
            <person name="Hata H."/>
            <person name="Watanabe M."/>
            <person name="Komatsu T."/>
            <person name="Mizushima-Sugano J."/>
            <person name="Satoh T."/>
            <person name="Shirai Y."/>
            <person name="Takahashi Y."/>
            <person name="Nakagawa K."/>
            <person name="Okumura K."/>
            <person name="Nagase T."/>
            <person name="Nomura N."/>
            <person name="Kikuchi H."/>
            <person name="Masuho Y."/>
            <person name="Yamashita R."/>
            <person name="Nakai K."/>
            <person name="Yada T."/>
            <person name="Nakamura Y."/>
            <person name="Ohara O."/>
            <person name="Isogai T."/>
            <person name="Sugano S."/>
        </authorList>
    </citation>
    <scope>NUCLEOTIDE SEQUENCE [LARGE SCALE MRNA]</scope>
    <source>
        <tissue>Cerebellum</tissue>
    </source>
</reference>
<reference key="6">
    <citation type="journal article" date="2003" name="Nature">
        <title>The DNA sequence and analysis of human chromosome 6.</title>
        <authorList>
            <person name="Mungall A.J."/>
            <person name="Palmer S.A."/>
            <person name="Sims S.K."/>
            <person name="Edwards C.A."/>
            <person name="Ashurst J.L."/>
            <person name="Wilming L."/>
            <person name="Jones M.C."/>
            <person name="Horton R."/>
            <person name="Hunt S.E."/>
            <person name="Scott C.E."/>
            <person name="Gilbert J.G.R."/>
            <person name="Clamp M.E."/>
            <person name="Bethel G."/>
            <person name="Milne S."/>
            <person name="Ainscough R."/>
            <person name="Almeida J.P."/>
            <person name="Ambrose K.D."/>
            <person name="Andrews T.D."/>
            <person name="Ashwell R.I.S."/>
            <person name="Babbage A.K."/>
            <person name="Bagguley C.L."/>
            <person name="Bailey J."/>
            <person name="Banerjee R."/>
            <person name="Barker D.J."/>
            <person name="Barlow K.F."/>
            <person name="Bates K."/>
            <person name="Beare D.M."/>
            <person name="Beasley H."/>
            <person name="Beasley O."/>
            <person name="Bird C.P."/>
            <person name="Blakey S.E."/>
            <person name="Bray-Allen S."/>
            <person name="Brook J."/>
            <person name="Brown A.J."/>
            <person name="Brown J.Y."/>
            <person name="Burford D.C."/>
            <person name="Burrill W."/>
            <person name="Burton J."/>
            <person name="Carder C."/>
            <person name="Carter N.P."/>
            <person name="Chapman J.C."/>
            <person name="Clark S.Y."/>
            <person name="Clark G."/>
            <person name="Clee C.M."/>
            <person name="Clegg S."/>
            <person name="Cobley V."/>
            <person name="Collier R.E."/>
            <person name="Collins J.E."/>
            <person name="Colman L.K."/>
            <person name="Corby N.R."/>
            <person name="Coville G.J."/>
            <person name="Culley K.M."/>
            <person name="Dhami P."/>
            <person name="Davies J."/>
            <person name="Dunn M."/>
            <person name="Earthrowl M.E."/>
            <person name="Ellington A.E."/>
            <person name="Evans K.A."/>
            <person name="Faulkner L."/>
            <person name="Francis M.D."/>
            <person name="Frankish A."/>
            <person name="Frankland J."/>
            <person name="French L."/>
            <person name="Garner P."/>
            <person name="Garnett J."/>
            <person name="Ghori M.J."/>
            <person name="Gilby L.M."/>
            <person name="Gillson C.J."/>
            <person name="Glithero R.J."/>
            <person name="Grafham D.V."/>
            <person name="Grant M."/>
            <person name="Gribble S."/>
            <person name="Griffiths C."/>
            <person name="Griffiths M.N.D."/>
            <person name="Hall R."/>
            <person name="Halls K.S."/>
            <person name="Hammond S."/>
            <person name="Harley J.L."/>
            <person name="Hart E.A."/>
            <person name="Heath P.D."/>
            <person name="Heathcott R."/>
            <person name="Holmes S.J."/>
            <person name="Howden P.J."/>
            <person name="Howe K.L."/>
            <person name="Howell G.R."/>
            <person name="Huckle E."/>
            <person name="Humphray S.J."/>
            <person name="Humphries M.D."/>
            <person name="Hunt A.R."/>
            <person name="Johnson C.M."/>
            <person name="Joy A.A."/>
            <person name="Kay M."/>
            <person name="Keenan S.J."/>
            <person name="Kimberley A.M."/>
            <person name="King A."/>
            <person name="Laird G.K."/>
            <person name="Langford C."/>
            <person name="Lawlor S."/>
            <person name="Leongamornlert D.A."/>
            <person name="Leversha M."/>
            <person name="Lloyd C.R."/>
            <person name="Lloyd D.M."/>
            <person name="Loveland J.E."/>
            <person name="Lovell J."/>
            <person name="Martin S."/>
            <person name="Mashreghi-Mohammadi M."/>
            <person name="Maslen G.L."/>
            <person name="Matthews L."/>
            <person name="McCann O.T."/>
            <person name="McLaren S.J."/>
            <person name="McLay K."/>
            <person name="McMurray A."/>
            <person name="Moore M.J.F."/>
            <person name="Mullikin J.C."/>
            <person name="Niblett D."/>
            <person name="Nickerson T."/>
            <person name="Novik K.L."/>
            <person name="Oliver K."/>
            <person name="Overton-Larty E.K."/>
            <person name="Parker A."/>
            <person name="Patel R."/>
            <person name="Pearce A.V."/>
            <person name="Peck A.I."/>
            <person name="Phillimore B.J.C.T."/>
            <person name="Phillips S."/>
            <person name="Plumb R.W."/>
            <person name="Porter K.M."/>
            <person name="Ramsey Y."/>
            <person name="Ranby S.A."/>
            <person name="Rice C.M."/>
            <person name="Ross M.T."/>
            <person name="Searle S.M."/>
            <person name="Sehra H.K."/>
            <person name="Sheridan E."/>
            <person name="Skuce C.D."/>
            <person name="Smith S."/>
            <person name="Smith M."/>
            <person name="Spraggon L."/>
            <person name="Squares S.L."/>
            <person name="Steward C.A."/>
            <person name="Sycamore N."/>
            <person name="Tamlyn-Hall G."/>
            <person name="Tester J."/>
            <person name="Theaker A.J."/>
            <person name="Thomas D.W."/>
            <person name="Thorpe A."/>
            <person name="Tracey A."/>
            <person name="Tromans A."/>
            <person name="Tubby B."/>
            <person name="Wall M."/>
            <person name="Wallis J.M."/>
            <person name="West A.P."/>
            <person name="White S.S."/>
            <person name="Whitehead S.L."/>
            <person name="Whittaker H."/>
            <person name="Wild A."/>
            <person name="Willey D.J."/>
            <person name="Wilmer T.E."/>
            <person name="Wood J.M."/>
            <person name="Wray P.W."/>
            <person name="Wyatt J.C."/>
            <person name="Young L."/>
            <person name="Younger R.M."/>
            <person name="Bentley D.R."/>
            <person name="Coulson A."/>
            <person name="Durbin R.M."/>
            <person name="Hubbard T."/>
            <person name="Sulston J.E."/>
            <person name="Dunham I."/>
            <person name="Rogers J."/>
            <person name="Beck S."/>
        </authorList>
    </citation>
    <scope>NUCLEOTIDE SEQUENCE [LARGE SCALE GENOMIC DNA]</scope>
</reference>
<reference key="7">
    <citation type="submission" date="2005-09" db="EMBL/GenBank/DDBJ databases">
        <authorList>
            <person name="Mural R.J."/>
            <person name="Istrail S."/>
            <person name="Sutton G.G."/>
            <person name="Florea L."/>
            <person name="Halpern A.L."/>
            <person name="Mobarry C.M."/>
            <person name="Lippert R."/>
            <person name="Walenz B."/>
            <person name="Shatkay H."/>
            <person name="Dew I."/>
            <person name="Miller J.R."/>
            <person name="Flanigan M.J."/>
            <person name="Edwards N.J."/>
            <person name="Bolanos R."/>
            <person name="Fasulo D."/>
            <person name="Halldorsson B.V."/>
            <person name="Hannenhalli S."/>
            <person name="Turner R."/>
            <person name="Yooseph S."/>
            <person name="Lu F."/>
            <person name="Nusskern D.R."/>
            <person name="Shue B.C."/>
            <person name="Zheng X.H."/>
            <person name="Zhong F."/>
            <person name="Delcher A.L."/>
            <person name="Huson D.H."/>
            <person name="Kravitz S.A."/>
            <person name="Mouchard L."/>
            <person name="Reinert K."/>
            <person name="Remington K.A."/>
            <person name="Clark A.G."/>
            <person name="Waterman M.S."/>
            <person name="Eichler E.E."/>
            <person name="Adams M.D."/>
            <person name="Hunkapiller M.W."/>
            <person name="Myers E.W."/>
            <person name="Venter J.C."/>
        </authorList>
    </citation>
    <scope>NUCLEOTIDE SEQUENCE [LARGE SCALE GENOMIC DNA]</scope>
</reference>
<reference key="8">
    <citation type="journal article" date="2004" name="Genome Res.">
        <title>The status, quality, and expansion of the NIH full-length cDNA project: the Mammalian Gene Collection (MGC).</title>
        <authorList>
            <consortium name="The MGC Project Team"/>
        </authorList>
    </citation>
    <scope>NUCLEOTIDE SEQUENCE [LARGE SCALE MRNA]</scope>
    <source>
        <tissue>Brain</tissue>
    </source>
</reference>
<reference key="9">
    <citation type="journal article" date="1998" name="J. Biol. Chem.">
        <title>Intercellular calcium signaling via gap junction in connexin-43-transfected cells.</title>
        <authorList>
            <person name="Toyofuku T."/>
            <person name="Yabuki M."/>
            <person name="Otsu K."/>
            <person name="Kuzuya T."/>
            <person name="Hori M."/>
            <person name="Tada M."/>
        </authorList>
    </citation>
    <scope>DISULFIDE BONDS</scope>
</reference>
<reference key="10">
    <citation type="journal article" date="2004" name="J. Biol. Chem.">
        <title>Connexin43 interacts with NOV: a possible mechanism for negative regulation of cell growth in choriocarcinoma cells.</title>
        <authorList>
            <person name="Gellhaus A."/>
            <person name="Dong X."/>
            <person name="Propson S."/>
            <person name="Maass K."/>
            <person name="Klein-Hitpass L."/>
            <person name="Kibschull M."/>
            <person name="Traub O."/>
            <person name="Willecke K."/>
            <person name="Perbal B."/>
            <person name="Lye S.J."/>
            <person name="Winterhager E."/>
        </authorList>
    </citation>
    <scope>INTERACTION WITH NOV</scope>
</reference>
<reference key="11">
    <citation type="journal article" date="2004" name="J. Biol. Chem.">
        <title>CCN3 (NOV) interacts with connexin43 in C6 glioma cells: possible mechanism of connexin-mediated growth suppression.</title>
        <authorList>
            <person name="Fu C.T."/>
            <person name="Bechberger J.F."/>
            <person name="Ozog M.A."/>
            <person name="Perbal B."/>
            <person name="Naus C.C."/>
        </authorList>
    </citation>
    <scope>INTERACTION WITH NOV</scope>
</reference>
<reference key="12">
    <citation type="journal article" date="2004" name="J. Cell Sci.">
        <title>Phosphorylation of serine 262 in the gap junction protein connexin-43 regulates DNA synthesis in cell-cell contact forming cardiomyocytes.</title>
        <authorList>
            <person name="Doble B.W."/>
            <person name="Dang X."/>
            <person name="Ping P."/>
            <person name="Fandrich R.R."/>
            <person name="Nickel B.E."/>
            <person name="Jin Y."/>
            <person name="Cattini P.A."/>
            <person name="Kardami E."/>
        </authorList>
    </citation>
    <scope>PHOSPHORYLATION AT SER-262</scope>
</reference>
<reference key="13">
    <citation type="journal article" date="2000" name="Circ. Res.">
        <title>Connexin expression and turnover: implications for cardiac excitability.</title>
        <authorList>
            <person name="Saffitz J.E."/>
            <person name="Laing J.G."/>
            <person name="Yamada K.A."/>
        </authorList>
    </citation>
    <scope>REVIEW</scope>
</reference>
<reference key="14">
    <citation type="journal article" date="1996" name="Circulation">
        <title>Failure to detect connexin43 mutations in 38 cases of sporadic and familial heterotaxy.</title>
        <authorList>
            <person name="Gebbia M."/>
            <person name="Towbin J.A."/>
            <person name="Casey B."/>
        </authorList>
    </citation>
    <scope>SHOWS THAT HEART LATERALIZATION DEFECT ARE NOT DUE TO GJA1</scope>
</reference>
<reference key="15">
    <citation type="journal article" date="1997" name="Heart">
        <title>Absence of mutations in the regulatory domain of the gap junction protein connexin 43 in patients with visceroatrial heterotaxy.</title>
        <authorList>
            <person name="Penman Splitt M."/>
            <person name="Tsai M.Y."/>
            <person name="Burn J."/>
            <person name="Goodship J.A."/>
        </authorList>
    </citation>
    <scope>SHOWS THAT HEART LATERALIZATION DEFECTS ARE NOT DUE TO GJA1</scope>
</reference>
<reference key="16">
    <citation type="journal article" date="1998" name="Circulation">
        <title>Connexin43 gene mutations and heterotaxy.</title>
        <authorList>
            <person name="Toth T."/>
            <person name="Hajdu J."/>
            <person name="Marton T."/>
            <person name="Nagy B."/>
            <person name="Papp Z."/>
        </authorList>
    </citation>
    <scope>SHOWS THAT HEART LATERALIZATION DEFECTS ARE NOT DUE TO GJA1</scope>
</reference>
<reference key="17">
    <citation type="journal article" date="2001" name="Hum. Mol. Genet.">
        <title>Mutations in GJA1 (connexin 43) are associated with non-syndromic autosomal recessive deafness.</title>
        <authorList>
            <person name="Liu X.Z."/>
            <person name="Xia X.J."/>
            <person name="Adams J."/>
            <person name="Chen Z.Y."/>
            <person name="Welch K.O."/>
            <person name="Tekin M."/>
            <person name="Ouyang X.M."/>
            <person name="Kristiansen A."/>
            <person name="Pandya A."/>
            <person name="Balkany T."/>
            <person name="Arnos K.S."/>
            <person name="Nance W.E."/>
        </authorList>
    </citation>
    <scope>ASSOCIATION WITH NON-SYNDROMIC AUTOSOMAL RECESSIVE DEAFNESS</scope>
    <scope>TISSUE SPECIFICITY</scope>
</reference>
<reference key="18">
    <citation type="journal article" date="2002" name="J. Biol. Chem.">
        <title>Casein kinase 1 regulates connexin-43 gap junction assembly.</title>
        <authorList>
            <person name="Cooper C.D."/>
            <person name="Lampe P.D."/>
        </authorList>
    </citation>
    <scope>PHOSPHORYLATION AT SER-325; SER-328 AND SER-330 BY CSNK1D/CK1</scope>
    <scope>INTERACTION WITH CSNK1D</scope>
</reference>
<reference key="19">
    <citation type="journal article" date="2005" name="Biochem. Biophys. Res. Commun.">
        <title>Molecular cloning and functional analysis of a novel Cx43 partner protein CIP150.</title>
        <authorList>
            <person name="Akiyama M."/>
            <person name="Ishida N."/>
            <person name="Ogawa T."/>
            <person name="Yogo K."/>
            <person name="Takeya T."/>
        </authorList>
    </citation>
    <scope>INTERACTION WITH RIC1</scope>
</reference>
<reference key="20">
    <citation type="journal article" date="2005" name="Mol. Carcinog.">
        <title>Cellular sublocalization of Cx43 and the establishment of functional coupling in IMR-32 neuroblastoma cells.</title>
        <authorList>
            <person name="Arnold J.M."/>
            <person name="Phipps M.W."/>
            <person name="Chen J."/>
            <person name="Phipps J."/>
        </authorList>
    </citation>
    <scope>PHOSPHORYLATION AT SER-255 AND SER-262</scope>
</reference>
<reference key="21">
    <citation type="journal article" date="2006" name="J. Med. Genet.">
        <title>A nonsense mutation in the first transmembrane domain of connexin 43 underlies autosomal recessive oculodentodigital syndrome.</title>
        <authorList>
            <person name="Richardson R.J."/>
            <person name="Joss S."/>
            <person name="Tomkin S."/>
            <person name="Ahmed M."/>
            <person name="Sheridan E."/>
            <person name="Dixon M.J."/>
        </authorList>
    </citation>
    <scope>INVOLVEMENT IN ODDD-AR</scope>
</reference>
<reference key="22">
    <citation type="journal article" date="2003" name="Am. J. Hum. Genet.">
        <title>Connexin 43 (GJA1) mutations cause the pleiotropic phenotype of oculodentodigital dysplasia.</title>
        <authorList>
            <person name="Paznekas W.A."/>
            <person name="Boyadjiev S.A."/>
            <person name="Shapiro R.E."/>
            <person name="Daniels O."/>
            <person name="Wollnik B."/>
            <person name="Keegan C.E."/>
            <person name="Innis J.W."/>
            <person name="Dinulos M.B."/>
            <person name="Christian C."/>
            <person name="Hannibal M.C."/>
            <person name="Jabs E.W."/>
        </authorList>
    </citation>
    <scope>NON-ASSOCIATION WITH NON-SYNDROMIC AUTOSOMAL RECESSIVE DEAFNESS</scope>
    <scope>VARIANTS ODDD SER-17; PRO-18; ARG-21; GLU-22; THR-23; VAL-40; LYS-49; PHE-52 INS; SER-76; VAL-90; CYS-98; ASN-102; THR-130; GLU-134; ARG-138; HIS-202 AND LEU-216</scope>
    <scope>VARIANT VAL-253</scope>
</reference>
<reference key="23">
    <citation type="journal article" date="2009" name="J. Cell. Mol. Med.">
        <title>Abnormal connexin43 in arrhythmogenic right ventricular cardiomyopathy caused by plakophilin-2 mutations.</title>
        <authorList>
            <person name="Fidler L.M."/>
            <person name="Wilson G.J."/>
            <person name="Liu F."/>
            <person name="Cui X."/>
            <person name="Scherer S.W."/>
            <person name="Taylor G.P."/>
            <person name="Hamilton R.M."/>
        </authorList>
    </citation>
    <scope>TISSUE SPECIFICITY</scope>
</reference>
<reference key="24">
    <citation type="journal article" date="2011" name="Sci. Signal.">
        <title>System-wide temporal characterization of the proteome and phosphoproteome of human embryonic stem cell differentiation.</title>
        <authorList>
            <person name="Rigbolt K.T."/>
            <person name="Prokhorova T.A."/>
            <person name="Akimov V."/>
            <person name="Henningsen J."/>
            <person name="Johansen P.T."/>
            <person name="Kratchmarova I."/>
            <person name="Kassem M."/>
            <person name="Mann M."/>
            <person name="Olsen J.V."/>
            <person name="Blagoev B."/>
        </authorList>
    </citation>
    <scope>PHOSPHORYLATION [LARGE SCALE ANALYSIS] AT SER-255; SER-314 AND SER-344</scope>
    <scope>IDENTIFICATION BY MASS SPECTROMETRY [LARGE SCALE ANALYSIS]</scope>
</reference>
<reference key="25">
    <citation type="journal article" date="2012" name="J. Biol. Chem.">
        <title>The gap junction channel protein connexin 43 is covalently modified and regulated by SUMOylation.</title>
        <authorList>
            <person name="Kjenseth A."/>
            <person name="Fykerud T.A."/>
            <person name="Sirnes S."/>
            <person name="Bruun J."/>
            <person name="Yohannes Z."/>
            <person name="Kolberg M."/>
            <person name="Omori Y."/>
            <person name="Rivedal E."/>
            <person name="Leithe E."/>
        </authorList>
    </citation>
    <scope>SUMOYLATION AT LYS-144 AND LYS-237</scope>
    <scope>SUBCELLULAR LOCATION</scope>
</reference>
<reference key="26">
    <citation type="journal article" date="2015" name="Hum. Mol. Genet.">
        <title>Exome sequencing reveals mutation in GJA1 as a cause of keratoderma-hypotrichosis-leukonychia totalis syndrome.</title>
        <authorList>
            <person name="Wang H."/>
            <person name="Cao X."/>
            <person name="Lin Z."/>
            <person name="Lee M."/>
            <person name="Jia X."/>
            <person name="Ren Y."/>
            <person name="Dai L."/>
            <person name="Guan L."/>
            <person name="Zhang J."/>
            <person name="Lin X."/>
            <person name="Zhang J."/>
            <person name="Chen Q."/>
            <person name="Feng C."/>
            <person name="Zhou E.Y."/>
            <person name="Yin J."/>
            <person name="Xu G."/>
            <person name="Yang Y."/>
        </authorList>
    </citation>
    <scope>INVOLVEMENT IN PPKCA1</scope>
    <scope>VARIANT PPKCA1 VAL-8</scope>
    <scope>CHARACTERIZATION OF VARIANT PPKCA1 VAL-8</scope>
</reference>
<reference key="27">
    <citation type="journal article" date="2015" name="J. Invest. Dermatol.">
        <title>Dominant de novo mutations in GJA1 cause erythrokeratodermia variabilis et progressiva, without features of oculodentodigital dysplasia.</title>
        <authorList>
            <consortium name="Yale Center for Mendelian Genomics"/>
            <person name="Boyden L.M."/>
            <person name="Craiglow B.G."/>
            <person name="Zhou J."/>
            <person name="Hu R."/>
            <person name="Loring E.C."/>
            <person name="Morel K.D."/>
            <person name="Lauren C.T."/>
            <person name="Lifton R.P."/>
            <person name="Bilguvar K."/>
            <person name="Paller A.S."/>
            <person name="Choate K.A."/>
        </authorList>
    </citation>
    <scope>INVOLVEMENT IN EKVP3</scope>
    <scope>VARIANTS EKVP3 VAL-44 AND ASP-227</scope>
    <scope>CHARACTERIZATION OF VARIANTS EKVP3 VAL-44 AND ASP-227</scope>
    <scope>SUBCELLULAR LOCATION</scope>
</reference>
<reference key="28">
    <citation type="journal article" date="1995" name="N. Engl. J. Med.">
        <title>Mutations of the connexin43 gap-junction gene in patients with heart malformations and defects of laterality.</title>
        <authorList>
            <person name="Britz-Cunningham S.H."/>
            <person name="Shah M.M."/>
            <person name="Zuppan C.W."/>
            <person name="Fletcher W.H."/>
        </authorList>
    </citation>
    <scope>VARIANTS HEART MALFORMATIONS GLY-352; PRO-364 AND ASN-365</scope>
    <scope>VARIANTS ALA-326 AND GLY-373</scope>
    <scope>CHARACTERIZATION OF VARIANT HEART MALFORMATIONS PRO-364</scope>
</reference>
<reference key="29">
    <citation type="journal article" date="2001" name="Mutat. Res.">
        <title>Identification of connexin43 (alpha1) gap junction gene mutations in patients with hypoplastic left heart syndrome by denaturing gradient gel electrophoresis (DGGE).</title>
        <authorList>
            <person name="Dasgupta C."/>
            <person name="Martinez A.-M."/>
            <person name="Zuppan C.W."/>
            <person name="Shah M.M."/>
            <person name="Bailey L.L."/>
            <person name="Fletcher W.H."/>
        </authorList>
    </citation>
    <scope>VARIANTS HLHS1 GLN-362 AND GLN-376</scope>
    <scope>CHARACTERIZATION OF VARIANTS HLHS1 GLN-362 AND GLN-376</scope>
</reference>
<reference key="30">
    <citation type="journal article" date="2004" name="Am. J. Med. Genet. A">
        <title>Novel Connexin 43 (GJA1) mutation causes oculo-dento-digital dysplasia with curly hair.</title>
        <authorList>
            <person name="Kjaer K.W."/>
            <person name="Hansen L."/>
            <person name="Eiberg H."/>
            <person name="Leicht P."/>
            <person name="Opitz J.M."/>
            <person name="Tommerup N."/>
        </authorList>
    </citation>
    <scope>VARIANT ODDD MET-96</scope>
</reference>
<reference key="31">
    <citation type="journal article" date="2004" name="Hum. Mutat.">
        <title>A homozygous GJA1 gene mutation causes a Hallermann-Streiff/ODDD spectrum phenotype.</title>
        <authorList>
            <person name="Pizzuti A."/>
            <person name="Flex E."/>
            <person name="Mingarelli R."/>
            <person name="Salpietro C."/>
            <person name="Zelante L."/>
            <person name="Dallapiccola B."/>
        </authorList>
    </citation>
    <scope>VARIANT HSS HIS-76</scope>
</reference>
<reference key="32">
    <citation type="journal article" date="2004" name="J. Med. Genet.">
        <title>Expression of Gja1 correlates with the phenotype observed in oculodentodigital syndrome/type III syndactyly.</title>
        <authorList>
            <person name="Richardson R.R."/>
            <person name="Donnai D."/>
            <person name="Meire F."/>
            <person name="Dixon M.J."/>
        </authorList>
    </citation>
    <scope>VARIANTS ODDD PRO-27; MET-31; VAL-40; TYR-69; PRO-113; ASN-134; GLN-148 AND HIS-202</scope>
    <scope>VARIANT SDTY3 SER-143</scope>
</reference>
<reference key="33">
    <citation type="journal article" date="2005" name="Am. J. Med. Genet. A">
        <title>A novel GJA1 mutation causes oculodentodigital dysplasia without syndactyly.</title>
        <authorList>
            <person name="Vitiello C."/>
            <person name="D'Adamo P."/>
            <person name="Gentile F."/>
            <person name="Vingolo E.M."/>
            <person name="Gasparini P."/>
            <person name="Banfi S."/>
        </authorList>
    </citation>
    <scope>VARIANT ODDD PRO-194</scope>
</reference>
<reference key="34">
    <citation type="journal article" date="2005" name="Am. J. Med. Genet. A">
        <title>Letter to the editor: Novel GJA1 mutation in oculodentodigital dysplasia.</title>
        <authorList>
            <person name="Honkaniemi J."/>
            <person name="Kalkkila J.P."/>
            <person name="Koivisto P."/>
            <person name="Kahara V."/>
            <person name="Latvala T."/>
            <person name="Simola K."/>
        </authorList>
    </citation>
    <scope>VARIANT ODDD ARG-95</scope>
</reference>
<reference key="35">
    <citation type="journal article" date="2005" name="Arch. Ophthalmol.">
        <title>A novel mutation in the GJA1 gene in a family with oculodentodigital dysplasia.</title>
        <authorList>
            <person name="Vasconcellos J.P.C."/>
            <person name="Melo M.B."/>
            <person name="Schimiti R.B."/>
            <person name="Bressanim N.C."/>
            <person name="Costa F.F."/>
            <person name="Costa V.P."/>
        </authorList>
    </citation>
    <scope>VARIANT ODDD HIS-59</scope>
</reference>
<reference key="36">
    <citation type="journal article" date="2005" name="Chin. Med. J.">
        <title>Mutations of connexin43 in fetuses with congenital heart malformations.</title>
        <authorList>
            <person name="Chen P."/>
            <person name="Xie L.-J."/>
            <person name="Huang G.-Y."/>
            <person name="Zhao X.-Q."/>
            <person name="Chang C."/>
        </authorList>
    </citation>
    <scope>VARIANTS CONGENITAL HEART MALFORMATIONS TRP-239; THR-251; PRO-253; LEU-283 AND ASN-290</scope>
</reference>
<reference key="37">
    <citation type="journal article" date="2005" name="Eur. J. Dermatol.">
        <title>Bigenic connexin mutations in a patient with hidrotic ectodermal dysplasia.</title>
        <authorList>
            <person name="Kellermayer R."/>
            <person name="Keller M."/>
            <person name="Ratajczak P."/>
            <person name="Richardson E."/>
            <person name="Harangi F."/>
            <person name="Merei E."/>
            <person name="Melegh B."/>
            <person name="Kosztolanyi G."/>
            <person name="Richard G."/>
        </authorList>
    </citation>
    <scope>VARIANT LEU-41</scope>
</reference>
<reference key="38">
    <citation type="journal article" date="2005" name="Eur. J. Med. Genet.">
        <title>Novel GJA1 mutations in patients with oculo-dento-digital dysplasia (ODDD).</title>
        <authorList>
            <person name="Debeer P."/>
            <person name="Van Esch H."/>
            <person name="Huysmans C."/>
            <person name="Pijkels E."/>
            <person name="De Smet L."/>
            <person name="Van de Ven W."/>
            <person name="Devriendt K."/>
            <person name="Fryns J.-P."/>
        </authorList>
    </citation>
    <scope>VARIANTS ODDD VAL-40; ASP-110; THR-147 AND PHE-169 DEL</scope>
</reference>
<reference key="39">
    <citation type="journal article" date="2006" name="Clin. Genet.">
        <title>Clinical and genetic variability of oculodentodigital dysplasia.</title>
        <authorList>
            <person name="Wiest T."/>
            <person name="Herrmann O."/>
            <person name="Stoegbauer F."/>
            <person name="Grasshoff U."/>
            <person name="Enders H."/>
            <person name="Koch M.J."/>
            <person name="Grond-Ginsbach C."/>
            <person name="Schwaninger M."/>
        </authorList>
    </citation>
    <scope>VARIANTS ODDD GLU-96; PRO-113; ASN-154 AND TYR-220</scope>
</reference>
<reference key="40">
    <citation type="journal article" date="2006" name="Eur. J. Dermatol.">
        <title>A novel GJA 1 mutation in oculo-dento-digital dysplasia with curly hair and hyperkeratosis.</title>
        <authorList>
            <person name="Kelly S.C."/>
            <person name="Ratajczak P."/>
            <person name="Keller M."/>
            <person name="Purcell S.M."/>
            <person name="Griffin T."/>
            <person name="Richard G."/>
        </authorList>
    </citation>
    <scope>VARIANT ODDD PRO-11</scope>
</reference>
<reference key="41">
    <citation type="journal article" date="2007" name="Int. J. Oral Maxillofac. Surg.">
        <title>Oculodentodigital dysplasia with mandibular retrognathism and absence of syndactyly: a case report with a novel mutation in the connexin 43 gene.</title>
        <authorList>
            <person name="van Es R.J.J."/>
            <person name="Wittebol-Post D."/>
            <person name="Beemer F.A."/>
        </authorList>
    </citation>
    <scope>VARIANT ODDD ALA-154</scope>
</reference>
<reference key="42">
    <citation type="journal article" date="2007" name="Ophthalmic Genet.">
        <title>A new GJA1 (connexin 43) mutation causing oculodentodigital dysplasia associated to uncommon features.</title>
        <authorList>
            <person name="de la Parra D.R."/>
            <person name="Zenteno J.C."/>
        </authorList>
    </citation>
    <scope>VARIANT ODDD VAL-2</scope>
</reference>
<reference key="43">
    <citation type="journal article" date="2009" name="Hum. Mutat.">
        <title>GJA1 mutations, variants, and connexin 43 dysfunction as it relates to the oculodentodigital dysplasia phenotype.</title>
        <authorList>
            <person name="Paznekas W.A."/>
            <person name="Karczeski B."/>
            <person name="Vermeer S."/>
            <person name="Lowry R.B."/>
            <person name="Delatycki M."/>
            <person name="Laurence F."/>
            <person name="Koivisto P.A."/>
            <person name="Van Maldergem L."/>
            <person name="Boyadjiev S.A."/>
            <person name="Bodurtha J.N."/>
            <person name="Jabs E.W."/>
        </authorList>
    </citation>
    <scope>VARIANTS ODDD VAL-7; VAL-40; PRO-49; GLN-49 INS; ALA-96; PRO-106; ALA-154; PHE-201 AND HIS-202</scope>
</reference>
<reference key="44">
    <citation type="journal article" date="2011" name="Arch. Ophthalmol.">
        <title>Oculodentodigital dysplasia: new ocular findings and a novel connexin 43 mutation.</title>
        <authorList>
            <person name="Gabriel L.A."/>
            <person name="Sachdeva R."/>
            <person name="Marcotty A."/>
            <person name="Rockwood E.J."/>
            <person name="Traboulsi E.I."/>
        </authorList>
    </citation>
    <scope>VARIANTS ODDD PRO-11 AND 41-VAL--ALA-44 DEL</scope>
</reference>
<reference key="45">
    <citation type="journal article" date="2013" name="Clin. Genet.">
        <title>A novel mutation in GJA1 causing oculodentodigital syndrome and primary lymphoedema in a three generation family.</title>
        <authorList>
            <person name="Brice G."/>
            <person name="Ostergaard P."/>
            <person name="Jeffery S."/>
            <person name="Gordon K."/>
            <person name="Mortimer P.S."/>
            <person name="Mansour S."/>
        </authorList>
    </citation>
    <scope>VARIANT ODDD ARG-206</scope>
</reference>
<reference key="46">
    <citation type="journal article" date="2013" name="PLoS ONE">
        <title>A novel autosomal recessive GJA1 missense mutation linked to Craniometaphyseal dysplasia.</title>
        <authorList>
            <person name="Hu Y."/>
            <person name="Chen I.P."/>
            <person name="de Almeida S."/>
            <person name="Tiziani V."/>
            <person name="Do Amaral C.M."/>
            <person name="Gowrishankar K."/>
            <person name="Passos-Bueno M.R."/>
            <person name="Reichenberger E.J."/>
        </authorList>
    </citation>
    <scope>VARIANT CMDR GLN-239</scope>
</reference>
<reference key="47">
    <citation type="journal article" date="2014" name="Gene">
        <title>Three novel GJA1 missense substitutions resulting in oculo-dento-digital dysplasia (ODDD) - further extension of the mutational spectrum.</title>
        <authorList>
            <person name="Jamsheer A."/>
            <person name="Sowinska-Seidler A."/>
            <person name="Socha M."/>
            <person name="Stembalska A."/>
            <person name="Kiraly-Borri C."/>
            <person name="Latos-Bielenska A."/>
        </authorList>
    </citation>
    <scope>VARIANTS ODDD HIS-47; TYR-86 AND ARG-106</scope>
</reference>
<reference key="48">
    <citation type="journal article" date="2017" name="Oral Dis.">
        <title>A novel GJA1 mutation in oculodentodigitaldysplasia with extensive loss of enamel.</title>
        <authorList>
            <person name="Porntaveetus T."/>
            <person name="Srichomthong C."/>
            <person name="Ohazama A."/>
            <person name="Suphapeetiporn K."/>
            <person name="Shotelersuk V."/>
        </authorList>
    </citation>
    <scope>VARIANT ODDD ILE-11</scope>
</reference>